<evidence type="ECO:0000255" key="1">
    <source>
        <dbReference type="PROSITE-ProRule" id="PRU01083"/>
    </source>
</evidence>
<evidence type="ECO:0000269" key="2">
    <source>
    </source>
</evidence>
<evidence type="ECO:0000269" key="3">
    <source>
    </source>
</evidence>
<evidence type="ECO:0000269" key="4">
    <source>
    </source>
</evidence>
<evidence type="ECO:0000269" key="5">
    <source>
    </source>
</evidence>
<evidence type="ECO:0000269" key="6">
    <source>
    </source>
</evidence>
<evidence type="ECO:0000269" key="7">
    <source>
    </source>
</evidence>
<evidence type="ECO:0000269" key="8">
    <source>
    </source>
</evidence>
<evidence type="ECO:0000269" key="9">
    <source>
    </source>
</evidence>
<evidence type="ECO:0000269" key="10">
    <source>
    </source>
</evidence>
<evidence type="ECO:0000269" key="11">
    <source>
    </source>
</evidence>
<evidence type="ECO:0000269" key="12">
    <source>
    </source>
</evidence>
<evidence type="ECO:0000269" key="13">
    <source>
    </source>
</evidence>
<evidence type="ECO:0000269" key="14">
    <source>
    </source>
</evidence>
<evidence type="ECO:0000269" key="15">
    <source>
    </source>
</evidence>
<evidence type="ECO:0000269" key="16">
    <source>
    </source>
</evidence>
<evidence type="ECO:0000269" key="17">
    <source>
    </source>
</evidence>
<evidence type="ECO:0000269" key="18">
    <source>
    </source>
</evidence>
<evidence type="ECO:0000269" key="19">
    <source>
    </source>
</evidence>
<evidence type="ECO:0000269" key="20">
    <source>
    </source>
</evidence>
<evidence type="ECO:0000269" key="21">
    <source>
    </source>
</evidence>
<evidence type="ECO:0000269" key="22">
    <source>
    </source>
</evidence>
<evidence type="ECO:0000269" key="23">
    <source>
    </source>
</evidence>
<evidence type="ECO:0000269" key="24">
    <source>
    </source>
</evidence>
<evidence type="ECO:0000269" key="25">
    <source>
    </source>
</evidence>
<evidence type="ECO:0000269" key="26">
    <source>
    </source>
</evidence>
<evidence type="ECO:0000269" key="27">
    <source>
    </source>
</evidence>
<evidence type="ECO:0000269" key="28">
    <source>
    </source>
</evidence>
<evidence type="ECO:0000269" key="29">
    <source>
    </source>
</evidence>
<evidence type="ECO:0000269" key="30">
    <source>
    </source>
</evidence>
<evidence type="ECO:0000269" key="31">
    <source>
    </source>
</evidence>
<evidence type="ECO:0000269" key="32">
    <source>
    </source>
</evidence>
<evidence type="ECO:0000269" key="33">
    <source>
    </source>
</evidence>
<evidence type="ECO:0000269" key="34">
    <source>
    </source>
</evidence>
<evidence type="ECO:0000269" key="35">
    <source>
    </source>
</evidence>
<evidence type="ECO:0000269" key="36">
    <source>
    </source>
</evidence>
<evidence type="ECO:0000269" key="37">
    <source>
    </source>
</evidence>
<evidence type="ECO:0000269" key="38">
    <source>
    </source>
</evidence>
<evidence type="ECO:0000269" key="39">
    <source>
    </source>
</evidence>
<evidence type="ECO:0000269" key="40">
    <source>
    </source>
</evidence>
<evidence type="ECO:0000269" key="41">
    <source>
    </source>
</evidence>
<evidence type="ECO:0000269" key="42">
    <source>
    </source>
</evidence>
<evidence type="ECO:0000269" key="43">
    <source>
    </source>
</evidence>
<evidence type="ECO:0000269" key="44">
    <source>
    </source>
</evidence>
<evidence type="ECO:0000269" key="45">
    <source>
    </source>
</evidence>
<evidence type="ECO:0000269" key="46">
    <source>
    </source>
</evidence>
<evidence type="ECO:0000269" key="47">
    <source>
    </source>
</evidence>
<evidence type="ECO:0000269" key="48">
    <source>
    </source>
</evidence>
<evidence type="ECO:0000269" key="49">
    <source>
    </source>
</evidence>
<evidence type="ECO:0000269" key="50">
    <source>
    </source>
</evidence>
<evidence type="ECO:0000269" key="51">
    <source>
    </source>
</evidence>
<evidence type="ECO:0000269" key="52">
    <source ref="5"/>
</evidence>
<evidence type="ECO:0000303" key="53">
    <source>
    </source>
</evidence>
<evidence type="ECO:0000303" key="54">
    <source>
    </source>
</evidence>
<evidence type="ECO:0000303" key="55">
    <source>
    </source>
</evidence>
<evidence type="ECO:0000303" key="56">
    <source>
    </source>
</evidence>
<evidence type="ECO:0000305" key="57"/>
<evidence type="ECO:0000305" key="58">
    <source>
    </source>
</evidence>
<evidence type="ECO:0000305" key="59">
    <source>
    </source>
</evidence>
<evidence type="ECO:0000305" key="60">
    <source>
    </source>
</evidence>
<evidence type="ECO:0000312" key="61">
    <source>
        <dbReference type="HGNC" id="HGNC:17357"/>
    </source>
</evidence>
<evidence type="ECO:0007744" key="62">
    <source>
        <dbReference type="PDB" id="4ROV"/>
    </source>
</evidence>
<evidence type="ECO:0007744" key="63">
    <source>
        <dbReference type="PDB" id="4ROW"/>
    </source>
</evidence>
<evidence type="ECO:0007744" key="64">
    <source>
        <dbReference type="PDB" id="8CX0"/>
    </source>
</evidence>
<evidence type="ECO:0007744" key="65">
    <source>
        <dbReference type="PDB" id="8CX1"/>
    </source>
</evidence>
<evidence type="ECO:0007744" key="66">
    <source>
        <dbReference type="PDB" id="8CX2"/>
    </source>
</evidence>
<evidence type="ECO:0007744" key="67">
    <source>
        <dbReference type="PDB" id="8H0I"/>
    </source>
</evidence>
<evidence type="ECO:0007744" key="68">
    <source>
        <dbReference type="PDB" id="8J62"/>
    </source>
</evidence>
<evidence type="ECO:0007829" key="69">
    <source>
        <dbReference type="PDB" id="2JYW"/>
    </source>
</evidence>
<evidence type="ECO:0007829" key="70">
    <source>
        <dbReference type="PDB" id="2KBO"/>
    </source>
</evidence>
<evidence type="ECO:0007829" key="71">
    <source>
        <dbReference type="PDB" id="3E1U"/>
    </source>
</evidence>
<evidence type="ECO:0007829" key="72">
    <source>
        <dbReference type="PDB" id="3V4K"/>
    </source>
</evidence>
<evidence type="ECO:0007829" key="73">
    <source>
        <dbReference type="PDB" id="6K3J"/>
    </source>
</evidence>
<evidence type="ECO:0007829" key="74">
    <source>
        <dbReference type="PDB" id="6K3K"/>
    </source>
</evidence>
<evidence type="ECO:0007829" key="75">
    <source>
        <dbReference type="PDB" id="8CX0"/>
    </source>
</evidence>
<evidence type="ECO:0007829" key="76">
    <source>
        <dbReference type="PDB" id="8CX1"/>
    </source>
</evidence>
<evidence type="ECO:0007829" key="77">
    <source>
        <dbReference type="PDB" id="8CX2"/>
    </source>
</evidence>
<evidence type="ECO:0007829" key="78">
    <source>
        <dbReference type="PDB" id="8J62"/>
    </source>
</evidence>
<proteinExistence type="evidence at protein level"/>
<organism>
    <name type="scientific">Homo sapiens</name>
    <name type="common">Human</name>
    <dbReference type="NCBI Taxonomy" id="9606"/>
    <lineage>
        <taxon>Eukaryota</taxon>
        <taxon>Metazoa</taxon>
        <taxon>Chordata</taxon>
        <taxon>Craniata</taxon>
        <taxon>Vertebrata</taxon>
        <taxon>Euteleostomi</taxon>
        <taxon>Mammalia</taxon>
        <taxon>Eutheria</taxon>
        <taxon>Euarchontoglires</taxon>
        <taxon>Primates</taxon>
        <taxon>Haplorrhini</taxon>
        <taxon>Catarrhini</taxon>
        <taxon>Hominidae</taxon>
        <taxon>Homo</taxon>
    </lineage>
</organism>
<reference key="1">
    <citation type="journal article" date="2003" name="J. Virol.">
        <title>The human immunodeficiency virus type 1 Vif protein reduces intracellular expression and inhibits packaging of APOBEC3G (CEM15), a cellular inhibitor of virus infectivity.</title>
        <authorList>
            <person name="Kao S."/>
            <person name="Khan M.A."/>
            <person name="Miyagi E."/>
            <person name="Plishka R."/>
            <person name="Buckler-White A."/>
            <person name="Strebel K."/>
        </authorList>
    </citation>
    <scope>NUCLEOTIDE SEQUENCE [MRNA] (ISOFORM 1)</scope>
    <scope>FUNCTION IN HIV-1 INFECTION INHIBITION</scope>
    <source>
        <tissue>Kidney</tissue>
    </source>
</reference>
<reference key="2">
    <citation type="journal article" date="2004" name="Nat. Genet.">
        <title>Complete sequencing and characterization of 21,243 full-length human cDNAs.</title>
        <authorList>
            <person name="Ota T."/>
            <person name="Suzuki Y."/>
            <person name="Nishikawa T."/>
            <person name="Otsuki T."/>
            <person name="Sugiyama T."/>
            <person name="Irie R."/>
            <person name="Wakamatsu A."/>
            <person name="Hayashi K."/>
            <person name="Sato H."/>
            <person name="Nagai K."/>
            <person name="Kimura K."/>
            <person name="Makita H."/>
            <person name="Sekine M."/>
            <person name="Obayashi M."/>
            <person name="Nishi T."/>
            <person name="Shibahara T."/>
            <person name="Tanaka T."/>
            <person name="Ishii S."/>
            <person name="Yamamoto J."/>
            <person name="Saito K."/>
            <person name="Kawai Y."/>
            <person name="Isono Y."/>
            <person name="Nakamura Y."/>
            <person name="Nagahari K."/>
            <person name="Murakami K."/>
            <person name="Yasuda T."/>
            <person name="Iwayanagi T."/>
            <person name="Wagatsuma M."/>
            <person name="Shiratori A."/>
            <person name="Sudo H."/>
            <person name="Hosoiri T."/>
            <person name="Kaku Y."/>
            <person name="Kodaira H."/>
            <person name="Kondo H."/>
            <person name="Sugawara M."/>
            <person name="Takahashi M."/>
            <person name="Kanda K."/>
            <person name="Yokoi T."/>
            <person name="Furuya T."/>
            <person name="Kikkawa E."/>
            <person name="Omura Y."/>
            <person name="Abe K."/>
            <person name="Kamihara K."/>
            <person name="Katsuta N."/>
            <person name="Sato K."/>
            <person name="Tanikawa M."/>
            <person name="Yamazaki M."/>
            <person name="Ninomiya K."/>
            <person name="Ishibashi T."/>
            <person name="Yamashita H."/>
            <person name="Murakawa K."/>
            <person name="Fujimori K."/>
            <person name="Tanai H."/>
            <person name="Kimata M."/>
            <person name="Watanabe M."/>
            <person name="Hiraoka S."/>
            <person name="Chiba Y."/>
            <person name="Ishida S."/>
            <person name="Ono Y."/>
            <person name="Takiguchi S."/>
            <person name="Watanabe S."/>
            <person name="Yosida M."/>
            <person name="Hotuta T."/>
            <person name="Kusano J."/>
            <person name="Kanehori K."/>
            <person name="Takahashi-Fujii A."/>
            <person name="Hara H."/>
            <person name="Tanase T.-O."/>
            <person name="Nomura Y."/>
            <person name="Togiya S."/>
            <person name="Komai F."/>
            <person name="Hara R."/>
            <person name="Takeuchi K."/>
            <person name="Arita M."/>
            <person name="Imose N."/>
            <person name="Musashino K."/>
            <person name="Yuuki H."/>
            <person name="Oshima A."/>
            <person name="Sasaki N."/>
            <person name="Aotsuka S."/>
            <person name="Yoshikawa Y."/>
            <person name="Matsunawa H."/>
            <person name="Ichihara T."/>
            <person name="Shiohata N."/>
            <person name="Sano S."/>
            <person name="Moriya S."/>
            <person name="Momiyama H."/>
            <person name="Satoh N."/>
            <person name="Takami S."/>
            <person name="Terashima Y."/>
            <person name="Suzuki O."/>
            <person name="Nakagawa S."/>
            <person name="Senoh A."/>
            <person name="Mizoguchi H."/>
            <person name="Goto Y."/>
            <person name="Shimizu F."/>
            <person name="Wakebe H."/>
            <person name="Hishigaki H."/>
            <person name="Watanabe T."/>
            <person name="Sugiyama A."/>
            <person name="Takemoto M."/>
            <person name="Kawakami B."/>
            <person name="Yamazaki M."/>
            <person name="Watanabe K."/>
            <person name="Kumagai A."/>
            <person name="Itakura S."/>
            <person name="Fukuzumi Y."/>
            <person name="Fujimori Y."/>
            <person name="Komiyama M."/>
            <person name="Tashiro H."/>
            <person name="Tanigami A."/>
            <person name="Fujiwara T."/>
            <person name="Ono T."/>
            <person name="Yamada K."/>
            <person name="Fujii Y."/>
            <person name="Ozaki K."/>
            <person name="Hirao M."/>
            <person name="Ohmori Y."/>
            <person name="Kawabata A."/>
            <person name="Hikiji T."/>
            <person name="Kobatake N."/>
            <person name="Inagaki H."/>
            <person name="Ikema Y."/>
            <person name="Okamoto S."/>
            <person name="Okitani R."/>
            <person name="Kawakami T."/>
            <person name="Noguchi S."/>
            <person name="Itoh T."/>
            <person name="Shigeta K."/>
            <person name="Senba T."/>
            <person name="Matsumura K."/>
            <person name="Nakajima Y."/>
            <person name="Mizuno T."/>
            <person name="Morinaga M."/>
            <person name="Sasaki M."/>
            <person name="Togashi T."/>
            <person name="Oyama M."/>
            <person name="Hata H."/>
            <person name="Watanabe M."/>
            <person name="Komatsu T."/>
            <person name="Mizushima-Sugano J."/>
            <person name="Satoh T."/>
            <person name="Shirai Y."/>
            <person name="Takahashi Y."/>
            <person name="Nakagawa K."/>
            <person name="Okumura K."/>
            <person name="Nagase T."/>
            <person name="Nomura N."/>
            <person name="Kikuchi H."/>
            <person name="Masuho Y."/>
            <person name="Yamashita R."/>
            <person name="Nakai K."/>
            <person name="Yada T."/>
            <person name="Nakamura Y."/>
            <person name="Ohara O."/>
            <person name="Isogai T."/>
            <person name="Sugano S."/>
        </authorList>
    </citation>
    <scope>NUCLEOTIDE SEQUENCE [LARGE SCALE MRNA] (ISOFORM 1)</scope>
    <source>
        <tissue>Synovium</tissue>
        <tissue>Teratocarcinoma</tissue>
    </source>
</reference>
<reference key="3">
    <citation type="submission" date="1999-09" db="EMBL/GenBank/DDBJ databases">
        <title>Novel genes expressed in hematopoietic stem/progenitor cells from myelodysplastic syndrome patients.</title>
        <authorList>
            <person name="Huang C."/>
            <person name="Qian B."/>
            <person name="Tu Y."/>
            <person name="Gu W."/>
            <person name="Wang Y."/>
            <person name="Han Z."/>
            <person name="Chen Z."/>
        </authorList>
    </citation>
    <scope>NUCLEOTIDE SEQUENCE [LARGE SCALE MRNA] (ISOFORM 1)</scope>
    <source>
        <tissue>Hematopoietic stem cell</tissue>
    </source>
</reference>
<reference key="4">
    <citation type="journal article" date="2004" name="Genome Biol.">
        <title>A genome annotation-driven approach to cloning the human ORFeome.</title>
        <authorList>
            <person name="Collins J.E."/>
            <person name="Wright C.L."/>
            <person name="Edwards C.A."/>
            <person name="Davis M.P."/>
            <person name="Grinham J.A."/>
            <person name="Cole C.G."/>
            <person name="Goward M.E."/>
            <person name="Aguado B."/>
            <person name="Mallya M."/>
            <person name="Mokrab Y."/>
            <person name="Huckle E.J."/>
            <person name="Beare D.M."/>
            <person name="Dunham I."/>
        </authorList>
    </citation>
    <scope>NUCLEOTIDE SEQUENCE [LARGE SCALE MRNA] (ISOFORM 1)</scope>
</reference>
<reference key="5">
    <citation type="submission" date="2005-07" db="EMBL/GenBank/DDBJ databases">
        <authorList>
            <consortium name="SeattleSNPs program for genomic applications"/>
        </authorList>
    </citation>
    <scope>NUCLEOTIDE SEQUENCE [GENOMIC DNA]</scope>
    <scope>VARIANTS ARG-186 AND GLU-275</scope>
</reference>
<reference key="6">
    <citation type="journal article" date="1999" name="Nature">
        <title>The DNA sequence of human chromosome 22.</title>
        <authorList>
            <person name="Dunham I."/>
            <person name="Hunt A.R."/>
            <person name="Collins J.E."/>
            <person name="Bruskiewich R."/>
            <person name="Beare D.M."/>
            <person name="Clamp M."/>
            <person name="Smink L.J."/>
            <person name="Ainscough R."/>
            <person name="Almeida J.P."/>
            <person name="Babbage A.K."/>
            <person name="Bagguley C."/>
            <person name="Bailey J."/>
            <person name="Barlow K.F."/>
            <person name="Bates K.N."/>
            <person name="Beasley O.P."/>
            <person name="Bird C.P."/>
            <person name="Blakey S.E."/>
            <person name="Bridgeman A.M."/>
            <person name="Buck D."/>
            <person name="Burgess J."/>
            <person name="Burrill W.D."/>
            <person name="Burton J."/>
            <person name="Carder C."/>
            <person name="Carter N.P."/>
            <person name="Chen Y."/>
            <person name="Clark G."/>
            <person name="Clegg S.M."/>
            <person name="Cobley V.E."/>
            <person name="Cole C.G."/>
            <person name="Collier R.E."/>
            <person name="Connor R."/>
            <person name="Conroy D."/>
            <person name="Corby N.R."/>
            <person name="Coville G.J."/>
            <person name="Cox A.V."/>
            <person name="Davis J."/>
            <person name="Dawson E."/>
            <person name="Dhami P.D."/>
            <person name="Dockree C."/>
            <person name="Dodsworth S.J."/>
            <person name="Durbin R.M."/>
            <person name="Ellington A.G."/>
            <person name="Evans K.L."/>
            <person name="Fey J.M."/>
            <person name="Fleming K."/>
            <person name="French L."/>
            <person name="Garner A.A."/>
            <person name="Gilbert J.G.R."/>
            <person name="Goward M.E."/>
            <person name="Grafham D.V."/>
            <person name="Griffiths M.N.D."/>
            <person name="Hall C."/>
            <person name="Hall R.E."/>
            <person name="Hall-Tamlyn G."/>
            <person name="Heathcott R.W."/>
            <person name="Ho S."/>
            <person name="Holmes S."/>
            <person name="Hunt S.E."/>
            <person name="Jones M.C."/>
            <person name="Kershaw J."/>
            <person name="Kimberley A.M."/>
            <person name="King A."/>
            <person name="Laird G.K."/>
            <person name="Langford C.F."/>
            <person name="Leversha M.A."/>
            <person name="Lloyd C."/>
            <person name="Lloyd D.M."/>
            <person name="Martyn I.D."/>
            <person name="Mashreghi-Mohammadi M."/>
            <person name="Matthews L.H."/>
            <person name="Mccann O.T."/>
            <person name="Mcclay J."/>
            <person name="Mclaren S."/>
            <person name="McMurray A.A."/>
            <person name="Milne S.A."/>
            <person name="Mortimore B.J."/>
            <person name="Odell C.N."/>
            <person name="Pavitt R."/>
            <person name="Pearce A.V."/>
            <person name="Pearson D."/>
            <person name="Phillimore B.J.C.T."/>
            <person name="Phillips S.H."/>
            <person name="Plumb R.W."/>
            <person name="Ramsay H."/>
            <person name="Ramsey Y."/>
            <person name="Rogers L."/>
            <person name="Ross M.T."/>
            <person name="Scott C.E."/>
            <person name="Sehra H.K."/>
            <person name="Skuce C.D."/>
            <person name="Smalley S."/>
            <person name="Smith M.L."/>
            <person name="Soderlund C."/>
            <person name="Spragon L."/>
            <person name="Steward C.A."/>
            <person name="Sulston J.E."/>
            <person name="Swann R.M."/>
            <person name="Vaudin M."/>
            <person name="Wall M."/>
            <person name="Wallis J.M."/>
            <person name="Whiteley M.N."/>
            <person name="Willey D.L."/>
            <person name="Williams L."/>
            <person name="Williams S.A."/>
            <person name="Williamson H."/>
            <person name="Wilmer T.E."/>
            <person name="Wilming L."/>
            <person name="Wright C.L."/>
            <person name="Hubbard T."/>
            <person name="Bentley D.R."/>
            <person name="Beck S."/>
            <person name="Rogers J."/>
            <person name="Shimizu N."/>
            <person name="Minoshima S."/>
            <person name="Kawasaki K."/>
            <person name="Sasaki T."/>
            <person name="Asakawa S."/>
            <person name="Kudoh J."/>
            <person name="Shintani A."/>
            <person name="Shibuya K."/>
            <person name="Yoshizaki Y."/>
            <person name="Aoki N."/>
            <person name="Mitsuyama S."/>
            <person name="Roe B.A."/>
            <person name="Chen F."/>
            <person name="Chu L."/>
            <person name="Crabtree J."/>
            <person name="Deschamps S."/>
            <person name="Do A."/>
            <person name="Do T."/>
            <person name="Dorman A."/>
            <person name="Fang F."/>
            <person name="Fu Y."/>
            <person name="Hu P."/>
            <person name="Hua A."/>
            <person name="Kenton S."/>
            <person name="Lai H."/>
            <person name="Lao H.I."/>
            <person name="Lewis J."/>
            <person name="Lewis S."/>
            <person name="Lin S.-P."/>
            <person name="Loh P."/>
            <person name="Malaj E."/>
            <person name="Nguyen T."/>
            <person name="Pan H."/>
            <person name="Phan S."/>
            <person name="Qi S."/>
            <person name="Qian Y."/>
            <person name="Ray L."/>
            <person name="Ren Q."/>
            <person name="Shaull S."/>
            <person name="Sloan D."/>
            <person name="Song L."/>
            <person name="Wang Q."/>
            <person name="Wang Y."/>
            <person name="Wang Z."/>
            <person name="White J."/>
            <person name="Willingham D."/>
            <person name="Wu H."/>
            <person name="Yao Z."/>
            <person name="Zhan M."/>
            <person name="Zhang G."/>
            <person name="Chissoe S."/>
            <person name="Murray J."/>
            <person name="Miller N."/>
            <person name="Minx P."/>
            <person name="Fulton R."/>
            <person name="Johnson D."/>
            <person name="Bemis G."/>
            <person name="Bentley D."/>
            <person name="Bradshaw H."/>
            <person name="Bourne S."/>
            <person name="Cordes M."/>
            <person name="Du Z."/>
            <person name="Fulton L."/>
            <person name="Goela D."/>
            <person name="Graves T."/>
            <person name="Hawkins J."/>
            <person name="Hinds K."/>
            <person name="Kemp K."/>
            <person name="Latreille P."/>
            <person name="Layman D."/>
            <person name="Ozersky P."/>
            <person name="Rohlfing T."/>
            <person name="Scheet P."/>
            <person name="Walker C."/>
            <person name="Wamsley A."/>
            <person name="Wohldmann P."/>
            <person name="Pepin K."/>
            <person name="Nelson J."/>
            <person name="Korf I."/>
            <person name="Bedell J.A."/>
            <person name="Hillier L.W."/>
            <person name="Mardis E."/>
            <person name="Waterston R."/>
            <person name="Wilson R."/>
            <person name="Emanuel B.S."/>
            <person name="Shaikh T."/>
            <person name="Kurahashi H."/>
            <person name="Saitta S."/>
            <person name="Budarf M.L."/>
            <person name="McDermid H.E."/>
            <person name="Johnson A."/>
            <person name="Wong A.C.C."/>
            <person name="Morrow B.E."/>
            <person name="Edelmann L."/>
            <person name="Kim U.J."/>
            <person name="Shizuya H."/>
            <person name="Simon M.I."/>
            <person name="Dumanski J.P."/>
            <person name="Peyrard M."/>
            <person name="Kedra D."/>
            <person name="Seroussi E."/>
            <person name="Fransson I."/>
            <person name="Tapia I."/>
            <person name="Bruder C.E."/>
            <person name="O'Brien K.P."/>
            <person name="Wilkinson P."/>
            <person name="Bodenteich A."/>
            <person name="Hartman K."/>
            <person name="Hu X."/>
            <person name="Khan A.S."/>
            <person name="Lane L."/>
            <person name="Tilahun Y."/>
            <person name="Wright H."/>
        </authorList>
    </citation>
    <scope>NUCLEOTIDE SEQUENCE [LARGE SCALE GENOMIC DNA]</scope>
</reference>
<reference key="7">
    <citation type="submission" date="2005-07" db="EMBL/GenBank/DDBJ databases">
        <authorList>
            <person name="Mural R.J."/>
            <person name="Istrail S."/>
            <person name="Sutton G.G."/>
            <person name="Florea L."/>
            <person name="Halpern A.L."/>
            <person name="Mobarry C.M."/>
            <person name="Lippert R."/>
            <person name="Walenz B."/>
            <person name="Shatkay H."/>
            <person name="Dew I."/>
            <person name="Miller J.R."/>
            <person name="Flanigan M.J."/>
            <person name="Edwards N.J."/>
            <person name="Bolanos R."/>
            <person name="Fasulo D."/>
            <person name="Halldorsson B.V."/>
            <person name="Hannenhalli S."/>
            <person name="Turner R."/>
            <person name="Yooseph S."/>
            <person name="Lu F."/>
            <person name="Nusskern D.R."/>
            <person name="Shue B.C."/>
            <person name="Zheng X.H."/>
            <person name="Zhong F."/>
            <person name="Delcher A.L."/>
            <person name="Huson D.H."/>
            <person name="Kravitz S.A."/>
            <person name="Mouchard L."/>
            <person name="Reinert K."/>
            <person name="Remington K.A."/>
            <person name="Clark A.G."/>
            <person name="Waterman M.S."/>
            <person name="Eichler E.E."/>
            <person name="Adams M.D."/>
            <person name="Hunkapiller M.W."/>
            <person name="Myers E.W."/>
            <person name="Venter J.C."/>
        </authorList>
    </citation>
    <scope>NUCLEOTIDE SEQUENCE [LARGE SCALE GENOMIC DNA]</scope>
</reference>
<reference key="8">
    <citation type="journal article" date="2004" name="Genome Res.">
        <title>The status, quality, and expansion of the NIH full-length cDNA project: the Mammalian Gene Collection (MGC).</title>
        <authorList>
            <consortium name="The MGC Project Team"/>
        </authorList>
    </citation>
    <scope>NUCLEOTIDE SEQUENCE [LARGE SCALE MRNA] (ISOFORMS 1 AND 3)</scope>
    <source>
        <tissue>Skin</tissue>
        <tissue>Uterus</tissue>
    </source>
</reference>
<reference key="9">
    <citation type="journal article" date="2002" name="Genomics">
        <title>An anthropoid-specific locus of orphan C to U RNA-editing enzymes on chromosome 22.</title>
        <authorList>
            <person name="Jarmuz A."/>
            <person name="Chester A."/>
            <person name="Bayliss J."/>
            <person name="Gisbourne J."/>
            <person name="Dunham I."/>
            <person name="Scott J."/>
            <person name="Navaratnam N."/>
        </authorList>
    </citation>
    <scope>GENE FAMILY ORGANIZATION</scope>
    <scope>TISSUE SPECIFICITY</scope>
    <scope>SUBUNIT</scope>
    <scope>RNA-BINDING</scope>
    <scope>ZINC-BINDING</scope>
</reference>
<reference key="10">
    <citation type="journal article" date="2002" name="Nature">
        <title>Isolation of a human gene that inhibits HIV-1 infection and is suppressed by the viral Vif protein.</title>
        <authorList>
            <person name="Sheehy A.M."/>
            <person name="Gaddis N.C."/>
            <person name="Choi J.D."/>
            <person name="Malim M.H."/>
        </authorList>
    </citation>
    <scope>TISSUE SPECIFICITY</scope>
    <scope>FUNCTION IN HIV-1 INFECTION INHIBITION</scope>
    <source>
        <tissue>T-cell lymphoma</tissue>
    </source>
</reference>
<reference key="11">
    <citation type="journal article" date="2003" name="Nature">
        <title>Broad antiretroviral defence by human APOBEC3G through lethal editing of nascent reverse transcripts.</title>
        <authorList>
            <person name="Mangeat B."/>
            <person name="Turelli P."/>
            <person name="Caron G."/>
            <person name="Friedli M."/>
            <person name="Perrin L."/>
            <person name="Trono D."/>
        </authorList>
    </citation>
    <scope>SUBCELLULAR LOCATION</scope>
    <scope>FUNCTION IN DNA C TO U EDITING</scope>
    <scope>MUTAGENESIS OF GLU-67; HIS-81; GLU-85; CYS-97; CYS-100; CYS-221; HIS-257; GLU-259; CYS-288; CYS-291 AND GLU-323</scope>
</reference>
<reference key="12">
    <citation type="journal article" date="2003" name="Cell">
        <title>DNA deamination mediates innate immunity to retroviral infection.</title>
        <authorList>
            <person name="Harris R.S."/>
            <person name="Bishop K.N."/>
            <person name="Sheehy A.M."/>
            <person name="Craig H.M."/>
            <person name="Petersen-Mahrt S.K."/>
            <person name="Watt I.N."/>
            <person name="Neuberger M.S."/>
            <person name="Malim M.H."/>
        </authorList>
    </citation>
    <scope>FUNCTION IN DNA C TO U EDITING</scope>
    <scope>MLV INFECTION INHIBITION</scope>
</reference>
<reference key="13">
    <citation type="journal article" date="2003" name="Nature">
        <title>The cytidine deaminase CEM15 induces hypermutation in newly synthesized HIV-1 DNA.</title>
        <authorList>
            <person name="Zhang H."/>
            <person name="Yang B."/>
            <person name="Pomerantz R.J."/>
            <person name="Zhang C."/>
            <person name="Arunachalam S.C."/>
            <person name="Gao L."/>
        </authorList>
    </citation>
    <scope>FUNCTION IN DNA C TO U EDITING</scope>
    <scope>CATALYTIC ACTIVITY</scope>
    <scope>COFACTOR</scope>
    <scope>MUTAGENESIS OF HIS-81; CYS-97; CYS-100; HIS-257; CYS-288 AND CYS-291</scope>
</reference>
<reference key="14">
    <citation type="journal article" date="2003" name="Cell">
        <title>Species-specific exclusion of APOBEC3G from HIV-1 virions by Vif.</title>
        <authorList>
            <person name="Mariani R."/>
            <person name="Chen D."/>
            <person name="Schroefelbauer B."/>
            <person name="Navarro F."/>
            <person name="Koenig R."/>
            <person name="Bollman B."/>
            <person name="Muenk C."/>
            <person name="Nymark-McMahon H."/>
            <person name="Landau N.R."/>
        </authorList>
    </citation>
    <scope>FUNCTION IN DNA C TO U EDITING</scope>
    <scope>SUBCELLULAR LOCATION</scope>
    <scope>INTERACTION WITH HIV-1 PROTEIN VIF (MICROBIAL INFECTION)</scope>
</reference>
<reference key="15">
    <citation type="journal article" date="2003" name="J. Biol. Chem.">
        <title>The enzymatic activity of CEM15/Apobec-3G is essential for the regulation of the infectivity of HIV-1 virion but not a sole determinant of its antiviral activity.</title>
        <authorList>
            <person name="Shindo K."/>
            <person name="Takaori-Kondo A."/>
            <person name="Kobayashi M."/>
            <person name="Abudu A."/>
            <person name="Fukunaga K."/>
            <person name="Uchiyama T."/>
        </authorList>
    </citation>
    <scope>FUNCTION IN DNA C TO U EDITING</scope>
    <scope>INFECTION REGULATION OF HIV-1</scope>
    <scope>MUTAGENESIS OF GLU-67; CYS-100; GLU-259 AND CYS-291</scope>
    <source>
        <tissue>T-cell lymphoma</tissue>
    </source>
</reference>
<reference key="16">
    <citation type="journal article" date="2003" name="Mol. Cell">
        <title>HIV-1 Vif blocks the antiviral activity of APOBEC3G by impairing both its translation and intracellular stability.</title>
        <authorList>
            <person name="Stopak K."/>
            <person name="de Noronha C."/>
            <person name="Yonemoto W."/>
            <person name="Greene W.C."/>
        </authorList>
    </citation>
    <scope>INTERACTION WITH HIV-1 PROTEIN VIF (MICROBIAL INFECTION)</scope>
    <scope>PROTEASOME MEDIATED DEGRADATION</scope>
    <scope>TRANSLATION INHIBITION</scope>
</reference>
<reference key="17">
    <citation type="journal article" date="2003" name="Nat. Med.">
        <title>HIV-1 Vif protein binds the editing enzyme APOBEC3G and induces its degradation.</title>
        <authorList>
            <person name="Marin M."/>
            <person name="Rose K.M."/>
            <person name="Kozak S.L."/>
            <person name="Kabat D."/>
        </authorList>
    </citation>
    <scope>INTERACTION WITH HIV-1 PROTEIN VIF (MICROBIAL INFECTION)</scope>
    <scope>UBIQUITINATION (MICROBIAL INFECTION)</scope>
</reference>
<reference key="18">
    <citation type="journal article" date="2003" name="Nat. Med.">
        <title>The antiretroviral enzyme APOBEC3G is degraded by the proteasome in response to HIV-1 Vif.</title>
        <authorList>
            <person name="Sheehy A.M."/>
            <person name="Gaddis N.C."/>
            <person name="Malim M.H."/>
        </authorList>
    </citation>
    <scope>FUNCTION IN DNA C TO U EDITING</scope>
    <scope>UBIQUITINATION (MICROBIAL INFECTION)</scope>
</reference>
<reference key="19">
    <citation type="journal article" date="2003" name="Trends Genet.">
        <title>Messenger RNA editing in mammals: new members of the APOBEC family seeking roles in the family business.</title>
        <authorList>
            <person name="Wedekind J.E."/>
            <person name="Dance G.S.C."/>
            <person name="Sowden M.P."/>
            <person name="Smith H.C."/>
        </authorList>
    </citation>
    <scope>REVIEW ON APOBEC FAMILY</scope>
</reference>
<reference key="20">
    <citation type="journal article" date="2003" name="Trends Mol. Med.">
        <title>Death and the retrovirus.</title>
        <authorList>
            <person name="Vartanian J.P."/>
            <person name="Sommer P."/>
            <person name="Wain-Hobson S."/>
        </authorList>
    </citation>
    <scope>REVIEW</scope>
</reference>
<reference key="21">
    <citation type="journal article" date="2003" name="Mol. Ther.">
        <title>HIV-1 Vif: counteracting innate antiretroviral defenses.</title>
        <authorList>
            <person name="Cullen B.R."/>
        </authorList>
    </citation>
    <scope>REVIEW</scope>
</reference>
<reference key="22">
    <citation type="journal article" date="2004" name="Proc. Natl. Acad. Sci. U.S.A.">
        <title>A single amino acid substitution in human APOBEC3G antiretroviral enzyme confers resistance to HIV-1 virion infectivity factor-induced depletion.</title>
        <authorList>
            <person name="Xu H."/>
            <person name="Svarovskaia E.S."/>
            <person name="Barr R."/>
            <person name="Zhang Y."/>
            <person name="Khan M.A."/>
            <person name="Strebel K."/>
            <person name="Pathak V.K."/>
        </authorList>
    </citation>
    <scope>MUTAGENESIS OF ASP-128</scope>
</reference>
<reference key="23">
    <citation type="journal article" date="2004" name="Science">
        <title>Inhibition of hepatitis B virus replication by APOBEC3G.</title>
        <authorList>
            <person name="Turelli P."/>
            <person name="Mangeat B."/>
            <person name="Jost S."/>
            <person name="Vianin S."/>
            <person name="Trono D."/>
        </authorList>
    </citation>
    <scope>FUNCTION IN HBV INHIBITION</scope>
</reference>
<reference key="24">
    <citation type="journal article" date="2006" name="Curr. Biol.">
        <title>APOBEC3A is a potent inhibitor of adeno-associated virus and retrotransposons.</title>
        <authorList>
            <person name="Chen H."/>
            <person name="Lilley C.E."/>
            <person name="Yu Q."/>
            <person name="Lee D.V."/>
            <person name="Chou J."/>
            <person name="Narvaiza I."/>
            <person name="Landau N.R."/>
            <person name="Weitzman M.D."/>
        </authorList>
    </citation>
    <scope>FUNCTION IN RETROTRANSPOSITION</scope>
    <scope>SUBCELLULAR LOCATION</scope>
</reference>
<reference key="25">
    <citation type="journal article" date="2006" name="J. Biol. Chem.">
        <title>Reversed functional organization of mouse and human APOBEC3 cytidine deaminase domains.</title>
        <authorList>
            <person name="Hakata Y."/>
            <person name="Landau N.R."/>
        </authorList>
    </citation>
    <scope>DOMAIN CMP/DCMP DEAMINASE</scope>
    <scope>SUBUNIT</scope>
    <scope>MUTAGENESIS OF GLU-67 AND GLU-259</scope>
</reference>
<reference key="26">
    <citation type="journal article" date="2006" name="J. Exp. Med.">
        <title>Induction of APOBEC3 family proteins, a defensive maneuver underlying interferon-induced anti-HIV-1 activity.</title>
        <authorList>
            <person name="Peng G."/>
            <person name="Lei K.J."/>
            <person name="Jin W."/>
            <person name="Greenwell-Wild T."/>
            <person name="Wahl S.M."/>
        </authorList>
    </citation>
    <scope>INDUCTION</scope>
</reference>
<reference key="27">
    <citation type="journal article" date="2006" name="J. Virol.">
        <title>Restriction of foamy viruses by APOBEC cytidine deaminases.</title>
        <authorList>
            <person name="Delebecque F."/>
            <person name="Suspene R."/>
            <person name="Calattini S."/>
            <person name="Casartelli N."/>
            <person name="Saib A."/>
            <person name="Froment A."/>
            <person name="Wain-Hobson S."/>
            <person name="Gessain A."/>
            <person name="Vartanian J.P."/>
            <person name="Schwartz O."/>
        </authorList>
    </citation>
    <scope>FUNCTION IN SFV RESTRICTION</scope>
</reference>
<reference key="28">
    <citation type="journal article" date="2006" name="PLoS Pathog.">
        <title>Human retroviral host restriction factors APOBEC3G and APOBEC3F localize to mRNA processing bodies.</title>
        <authorList>
            <person name="Wichroski M.J."/>
            <person name="Robb G.B."/>
            <person name="Rana T.M."/>
        </authorList>
    </citation>
    <scope>SUBCELLULAR LOCATION</scope>
    <scope>INTERACTION WITH APOBEC3F; AGO2; EIF4E; EIF4ENIF1; DCP2 AND DDX6</scope>
</reference>
<reference key="29">
    <citation type="journal article" date="2007" name="J. Biol. Chem.">
        <title>APOBEC3F can inhibit the accumulation of HIV-1 reverse transcription products in the absence of hypermutation. Comparisons with APOBEC3G.</title>
        <authorList>
            <person name="Holmes R.K."/>
            <person name="Koning F.A."/>
            <person name="Bishop K.N."/>
            <person name="Malim M.H."/>
        </authorList>
    </citation>
    <scope>FUNCTION</scope>
</reference>
<reference key="30">
    <citation type="journal article" date="2008" name="Annu. Rev. Immunol.">
        <title>The APOBEC3 cytidine deaminases: an innate defensive network opposing exogenous retroviruses and endogenous retroelements.</title>
        <authorList>
            <person name="Chiu Y.L."/>
            <person name="Greene W.C."/>
        </authorList>
    </citation>
    <scope>REVIEW</scope>
</reference>
<reference key="31">
    <citation type="journal article" date="2008" name="Curr. Opin. Infect. Dis.">
        <title>Hepatitis B: modern concepts in pathogenesis--APOBEC3 cytidine deaminases as effectors in innate immunity against the hepatitis B virus.</title>
        <authorList>
            <person name="Bonvin M."/>
            <person name="Greeve J."/>
        </authorList>
    </citation>
    <scope>REVIEW ON FUNCTION IN HBV RESTRICTION</scope>
</reference>
<reference key="32">
    <citation type="journal article" date="2008" name="J. Biol. Chem.">
        <title>APOBEC3G subunits self-associate via the C-terminal deaminase domain.</title>
        <authorList>
            <person name="Bennett R.P."/>
            <person name="Salter J.D."/>
            <person name="Liu X."/>
            <person name="Wedekind J.E."/>
            <person name="Smith H.C."/>
        </authorList>
    </citation>
    <scope>SUBUNIT</scope>
</reference>
<reference key="33">
    <citation type="journal article" date="2008" name="J. Virol.">
        <title>Two regions within the amino-terminal half of APOBEC3G cooperate to determine cytoplasmic localization.</title>
        <authorList>
            <person name="Stenglein M.D."/>
            <person name="Matsuo H."/>
            <person name="Harris R.S."/>
        </authorList>
    </citation>
    <scope>SUBCELLULAR LOCATION</scope>
</reference>
<reference key="34">
    <citation type="journal article" date="2008" name="Nat. Struct. Mol. Biol.">
        <title>Phosphorylation of APOBEC3G by protein kinase A regulates its interaction with HIV-1 Vif.</title>
        <authorList>
            <person name="Shirakawa K."/>
            <person name="Takaori-Kondo A."/>
            <person name="Yokoyama M."/>
            <person name="Izumi T."/>
            <person name="Matsui M."/>
            <person name="Io K."/>
            <person name="Sato T."/>
            <person name="Sato H."/>
            <person name="Uchiyama T."/>
        </authorList>
    </citation>
    <scope>PHOSPHORYLATION AT THR-32</scope>
    <scope>INTERACTION WITH PRKACA</scope>
</reference>
<reference key="35">
    <citation type="journal article" date="2009" name="J. Virol.">
        <title>Restriction of equine infectious anemia virus by equine APOBEC3 cytidine deaminases.</title>
        <authorList>
            <person name="Zielonka J."/>
            <person name="Bravo I.G."/>
            <person name="Marino D."/>
            <person name="Conrad E."/>
            <person name="Perkovic M."/>
            <person name="Battenberg M."/>
            <person name="Cichutek K."/>
            <person name="Muenk C."/>
        </authorList>
    </citation>
    <scope>FUNCTION IN EIAV RESTRICTION</scope>
</reference>
<reference key="36">
    <citation type="journal article" date="2009" name="Philos. Trans. R. Soc. Lond., B, Biol. Sci.">
        <title>APOBEC3G: an intracellular centurion.</title>
        <authorList>
            <person name="Chiu Y.L."/>
            <person name="Greene W.C."/>
        </authorList>
    </citation>
    <scope>REVIEW</scope>
</reference>
<reference key="37">
    <citation type="journal article" date="2009" name="Proc. Natl. Acad. Sci. U.S.A.">
        <title>HIV-1 Vif-mediated ubiquitination/degradation of APOBEC3G involves four critical lysine residues in its C-terminal domain.</title>
        <authorList>
            <person name="Iwatani Y."/>
            <person name="Chan D.S."/>
            <person name="Liu L."/>
            <person name="Yoshii H."/>
            <person name="Shibata J."/>
            <person name="Yamamoto N."/>
            <person name="Levin J.G."/>
            <person name="Gronenborn A.M."/>
            <person name="Sugiura W."/>
        </authorList>
    </citation>
    <scope>UBIQUITINATION AT LYS- 297; LYS-301; LYS-303 AND LYS-334 (MICROBIAL INFECTION)</scope>
    <scope>MUTAGENESIS OF 297-LYS--LYS-303 AND LYS-334</scope>
</reference>
<reference key="38">
    <citation type="journal article" date="2010" name="J. Virol.">
        <title>APOBEC3F and APOBEC3G inhibit HIV-1 DNA integration by different mechanisms.</title>
        <authorList>
            <person name="Mbisa J.L."/>
            <person name="Bu W."/>
            <person name="Pathak V.K."/>
        </authorList>
    </citation>
    <scope>FUNCTION IN HIV-1 RESTRICTION</scope>
</reference>
<reference key="39">
    <citation type="journal article" date="2010" name="J. Virol.">
        <title>Inhibition of xenotropic murine leukemia virus-related virus by APOBEC3 proteins and antiviral drugs.</title>
        <authorList>
            <person name="Paprotka T."/>
            <person name="Venkatachari N.J."/>
            <person name="Chaipan C."/>
            <person name="Burdick R."/>
            <person name="Delviks-Frankenberry K.A."/>
            <person name="Hu W.S."/>
            <person name="Pathak V.K."/>
        </authorList>
    </citation>
    <scope>FUNCTION IN XMRV RESTRICTION</scope>
</reference>
<reference key="40">
    <citation type="journal article" date="2010" name="Nucleic Acids Res.">
        <title>Quantitative profiling of the full APOBEC3 mRNA repertoire in lymphocytes and tissues: implications for HIV-1 restriction.</title>
        <authorList>
            <person name="Refsland E.W."/>
            <person name="Stenglein M.D."/>
            <person name="Shindo K."/>
            <person name="Albin J.S."/>
            <person name="Brown W.L."/>
            <person name="Harris R.S."/>
        </authorList>
    </citation>
    <scope>TISSUE SPECIFICITY</scope>
</reference>
<reference key="41">
    <citation type="journal article" date="2010" name="Virus Res.">
        <title>APOBEC3G directly binds Hepatitis B virus core protein in cell and cell free systems.</title>
        <authorList>
            <person name="Zhao D."/>
            <person name="Wang X."/>
            <person name="Lou G."/>
            <person name="Peng G."/>
            <person name="Li J."/>
            <person name="Zhu H."/>
            <person name="Chen F."/>
            <person name="Li S."/>
            <person name="Liu D."/>
            <person name="Chen Z."/>
            <person name="Yang Z."/>
        </authorList>
    </citation>
    <scope>INTERACTION WITH HEPATITIS B VIRUS CAPSID PROTEIN (MICROBIAL INFECTION)</scope>
</reference>
<reference key="42">
    <citation type="journal article" date="2011" name="J. Biol. Chem.">
        <title>Phosphorylation directly regulates the intrinsic DNA cytidine deaminase activity of activation-induced deaminase and APOBEC3G protein.</title>
        <authorList>
            <person name="Demorest Z.L."/>
            <person name="Li M."/>
            <person name="Harris R.S."/>
        </authorList>
    </citation>
    <scope>PHOSPHORYLATION AT THR-32 AND THR-218</scope>
    <scope>SUBCELLULAR LOCATION</scope>
    <scope>MUTAGENESIS OF THR-218</scope>
</reference>
<reference key="43">
    <citation type="journal article" date="2011" name="Nature">
        <title>Vif hijacks CBF-beta to degrade APOBEC3G and promote HIV-1 infection.</title>
        <authorList>
            <person name="Jaeger S."/>
            <person name="Kim D.Y."/>
            <person name="Hultquist J.F."/>
            <person name="Shindo K."/>
            <person name="LaRue R.S."/>
            <person name="Kwon E."/>
            <person name="Li M."/>
            <person name="Anderson B.D."/>
            <person name="Yen L."/>
            <person name="Stanley D."/>
            <person name="Mahon C."/>
            <person name="Kane J."/>
            <person name="Franks-Skiba K."/>
            <person name="Cimermancic P."/>
            <person name="Burlingame A."/>
            <person name="Sali A."/>
            <person name="Craik C.S."/>
            <person name="Harris R.S."/>
            <person name="Gross J.D."/>
            <person name="Krogan N.J."/>
        </authorList>
    </citation>
    <scope>ACTIVITY REGULATION (MICROBIAL INFECTION)</scope>
    <scope>UBIQUITINATION (MICROBIAL INFECTION)</scope>
    <scope>INTERACTION WITH HIV-1 VIF (MICROBIAL INFECTION)</scope>
</reference>
<reference key="44">
    <citation type="journal article" date="2011" name="J. Virol.">
        <title>Structure-function analyses point to a polynucleotide-accommodating groove essential for APOBEC3A restriction activities.</title>
        <authorList>
            <person name="Bulliard Y."/>
            <person name="Narvaiza I."/>
            <person name="Bertero A."/>
            <person name="Peddi S."/>
            <person name="Roehrig U.F."/>
            <person name="Ortiz M."/>
            <person name="Zoete V."/>
            <person name="Castro-Diaz N."/>
            <person name="Turelli P."/>
            <person name="Telenti A."/>
            <person name="Michielin O."/>
            <person name="Weitzman M.D."/>
            <person name="Trono D."/>
        </authorList>
    </citation>
    <scope>FUNCTION IN HOST DEFENSE</scope>
    <scope>MUTAGENESIS OF GLU-217 AND PRO-247</scope>
</reference>
<reference key="45">
    <citation type="journal article" date="2011" name="J. Virol.">
        <title>Human and rhesus APOBEC3D, APOBEC3F, APOBEC3G, and APOBEC3H demonstrate a conserved capacity to restrict Vif-deficient HIV-1.</title>
        <authorList>
            <person name="Hultquist J.F."/>
            <person name="Lengyel J.A."/>
            <person name="Refsland E.W."/>
            <person name="LaRue R.S."/>
            <person name="Lackey L."/>
            <person name="Brown W.L."/>
            <person name="Harris R.S."/>
        </authorList>
    </citation>
    <scope>FUNCTION IN HIV-1 RESTRICTION</scope>
    <scope>SUBCELLULAR LOCATION</scope>
    <scope>ACTIVITY REGULATION (MICROBIAL INFECTION)</scope>
</reference>
<reference key="46">
    <citation type="journal article" date="2011" name="Trends Biochem. Sci.">
        <title>APOBEC3G: a double agent in defense.</title>
        <authorList>
            <person name="Smith H.C."/>
        </authorList>
    </citation>
    <scope>REVIEW</scope>
</reference>
<reference key="47">
    <citation type="journal article" date="2011" name="Virology">
        <title>Functional analysis of the two cytidine deaminase domains in APOBEC3G.</title>
        <authorList>
            <person name="Li X."/>
            <person name="Ma J."/>
            <person name="Zhang Q."/>
            <person name="Zhou J."/>
            <person name="Yin X."/>
            <person name="Zhai C."/>
            <person name="You X."/>
            <person name="Yu L."/>
            <person name="Guo F."/>
            <person name="Zhao L."/>
            <person name="Li Z."/>
            <person name="Zeng Y."/>
            <person name="Cen S."/>
        </authorList>
    </citation>
    <scope>DOMAIN CMP/DCMP DEAMINASE</scope>
</reference>
<reference key="48">
    <citation type="journal article" date="2012" name="Front. Microbiol.">
        <title>Antiviral mechanism and biochemical basis of the human APOBEC3 family.</title>
        <authorList>
            <person name="Imahashi M."/>
            <person name="Nakashima M."/>
            <person name="Iwatani Y."/>
        </authorList>
    </citation>
    <scope>REVIEW</scope>
</reference>
<reference key="49">
    <citation type="journal article" date="2012" name="Front. Microbiol.">
        <title>Retroelements versus APOBEC3 family members: No great escape from the magnificent seven.</title>
        <authorList>
            <person name="Arias J.F."/>
            <person name="Koyama T."/>
            <person name="Kinomoto M."/>
            <person name="Tokunaga K."/>
        </authorList>
    </citation>
    <scope>REVIEW</scope>
</reference>
<reference key="50">
    <citation type="journal article" date="2012" name="J. Biol. Chem.">
        <title>APOBEC3G inhibits microRNA-mediated repression of translation by interfering with the interaction between Argonaute-2 and MOV10.</title>
        <authorList>
            <person name="Liu C."/>
            <person name="Zhang X."/>
            <person name="Huang F."/>
            <person name="Yang B."/>
            <person name="Li J."/>
            <person name="Liu B."/>
            <person name="Luo H."/>
            <person name="Zhang P."/>
            <person name="Zhang H."/>
        </authorList>
    </citation>
    <scope>FUNCTION</scope>
    <scope>INTERACTION WITH MOV10</scope>
</reference>
<reference key="51">
    <citation type="journal article" date="2012" name="J. Virol.">
        <title>The cellular antiviral protein APOBEC3G interacts with HIV-1 reverse transcriptase and inhibits its function during viral replication.</title>
        <authorList>
            <person name="Wang X."/>
            <person name="Ao Z."/>
            <person name="Chen L."/>
            <person name="Kobinger G."/>
            <person name="Peng J."/>
            <person name="Yao X."/>
        </authorList>
    </citation>
    <scope>INTERACTION WITH HIV-1 REVERSE TRANSCRIPTASE/RIBONUCLEASE H (MICROBIAL INFECTION)</scope>
</reference>
<reference key="52">
    <citation type="journal article" date="2012" name="J. Virol.">
        <title>HIV-1 replication and APOBEC3 antiviral activity are not regulated by P bodies.</title>
        <authorList>
            <person name="Phalora P.K."/>
            <person name="Sherer N.M."/>
            <person name="Wolinsky S.M."/>
            <person name="Swanson C.M."/>
            <person name="Malim M.H."/>
        </authorList>
    </citation>
    <scope>FUNCTION</scope>
    <scope>SUBCELLULAR LOCATION</scope>
    <scope>INTERACTION WITH AGO1; AGO2 AND AGO3</scope>
</reference>
<reference key="53">
    <citation type="journal article" date="2012" name="Nat. Struct. Mol. Biol.">
        <title>The APOBEC3C crystal structure and the interface for HIV-1 Vif binding.</title>
        <authorList>
            <person name="Kitamura S."/>
            <person name="Ode H."/>
            <person name="Nakashima M."/>
            <person name="Imahashi M."/>
            <person name="Naganawa Y."/>
            <person name="Kurosawa T."/>
            <person name="Yokomaku Y."/>
            <person name="Yamane T."/>
            <person name="Watanabe N."/>
            <person name="Suzuki A."/>
            <person name="Sugiura W."/>
            <person name="Iwatani Y."/>
        </authorList>
    </citation>
    <scope>INTERACTION WITH HIV-1 VIF</scope>
    <scope>MUTAGENESIS OF PHE-74; LEU-80; TYR-86; PHE-107 AND ASP-128</scope>
</reference>
<reference key="54">
    <citation type="journal article" date="2012" name="PLoS Pathog.">
        <title>Endogenous origins of HIV-1 G-to-A hypermutation and restriction in the nonpermissive T cell line CEM2n.</title>
        <authorList>
            <person name="Refsland E.W."/>
            <person name="Hultquist J.F."/>
            <person name="Harris R.S."/>
        </authorList>
    </citation>
    <scope>FUNCTION IN HIV-1 RESTRICTION</scope>
</reference>
<reference key="55">
    <citation type="journal article" date="2012" name="PLoS Pathog.">
        <title>Inhibition of a NEDD8 Cascade Restores Restriction of HIV by APOBEC3G.</title>
        <authorList>
            <person name="Stanley D.J."/>
            <person name="Bartholomeeusen K."/>
            <person name="Crosby D.C."/>
            <person name="Kim D.Y."/>
            <person name="Kwon E."/>
            <person name="Yen L."/>
            <person name="Cartozo N.C."/>
            <person name="Li M."/>
            <person name="Jaeger S."/>
            <person name="Mason-Herr J."/>
            <person name="Hayashi F."/>
            <person name="Yokoyama S."/>
            <person name="Krogan N.J."/>
            <person name="Harris R.S."/>
            <person name="Peterlin B.M."/>
            <person name="Gross J.D."/>
        </authorList>
    </citation>
    <scope>UBIQUITINATION (MICROBIAL INFECTION)</scope>
</reference>
<reference key="56">
    <citation type="journal article" date="2012" name="Retrovirology">
        <title>Emerging complexities of APOBEC3G action on immunity and viral fitness during HIV infection and treatment.</title>
        <authorList>
            <person name="Monajemi M."/>
            <person name="Woodworth C.F."/>
            <person name="Benkaroun J."/>
            <person name="Grant M."/>
            <person name="Larijani M."/>
        </authorList>
    </citation>
    <scope>REVIEW</scope>
</reference>
<reference key="57">
    <citation type="journal article" date="2012" name="Semin. Cell Dev. Biol.">
        <title>Functions and regulation of the APOBEC family of proteins.</title>
        <authorList>
            <person name="Smith H.C."/>
            <person name="Bennett R.P."/>
            <person name="Kizilyer A."/>
            <person name="McDougall W.M."/>
            <person name="Prohaska K.M."/>
        </authorList>
    </citation>
    <scope>REVIEW</scope>
</reference>
<reference key="58">
    <citation type="journal article" date="2013" name="J. Virol.">
        <title>APOBEC3G restricts HIV-1 to a greater extent than APOBEC3F and APOBEC3DE in human primary CD4+ t cells and macrophages.</title>
        <authorList>
            <person name="Chaipan C."/>
            <person name="Smith J.L."/>
            <person name="Hu W.S."/>
            <person name="Pathak V.K."/>
        </authorList>
    </citation>
    <scope>FUNCTION IN HIV-1 RESTRICTION</scope>
</reference>
<reference key="59">
    <citation type="journal article" date="2013" name="J. Mol. Biol.">
        <title>Dispersed sites of HIV Vif-dependent polyubiquitination in the DNA deaminase APOBEC3F.</title>
        <authorList>
            <person name="Albin J.S."/>
            <person name="Anderson J.S."/>
            <person name="Johnson J.R."/>
            <person name="Harjes E."/>
            <person name="Matsuo H."/>
            <person name="Krogan N.J."/>
            <person name="Harris R.S."/>
        </authorList>
    </citation>
    <scope>UBIQUITINATION AT LYS-42; LYS-52; LYS-63; LYS-150; LYS-163; LYS-249; LYS-270; LYS-297; LYS-303 AND LYS-334 (MICROBIAL INFECTION)</scope>
</reference>
<reference key="60">
    <citation type="journal article" date="2013" name="J. Virol.">
        <title>The suppression of HIV-1 infection by APOBEC3 proteins in primary human CD4+ T cells is associated with the inhibition of processive reverse transcription as well as excessive cytidine deamination.</title>
        <authorList>
            <person name="Gillick K."/>
            <person name="Pollpeter D."/>
            <person name="Phalora P."/>
            <person name="Kim E.Y."/>
            <person name="Wolinsky S.M."/>
            <person name="Malim M.H."/>
        </authorList>
    </citation>
    <scope>FUNCTION IN HIV-1 RESTRICTION</scope>
</reference>
<reference key="61">
    <citation type="journal article" date="2019" name="Cell Host Microbe">
        <title>ARIH2 is a Vif-dependent regulator of CUL5-mediated APOBEC3G degradation in HIV infection.</title>
        <authorList>
            <person name="Huettenhain R."/>
            <person name="Xu J."/>
            <person name="Burton L.A."/>
            <person name="Gordon D.E."/>
            <person name="Hultquist J.F."/>
            <person name="Johnson J.R."/>
            <person name="Satkamp L."/>
            <person name="Hiatt J."/>
            <person name="Rhee D.Y."/>
            <person name="Baek K."/>
            <person name="Crosby D.C."/>
            <person name="Frankel A.D."/>
            <person name="Marson A."/>
            <person name="Harper J.W."/>
            <person name="Alpi A.F."/>
            <person name="Schulman B.A."/>
            <person name="Gross J.D."/>
            <person name="Krogan N.J."/>
        </authorList>
    </citation>
    <scope>UBIQUITINATION AT LYS--63; LYS-249; LYS-297; LYS-303 AND LYS-334 (MICROBIAL INFECTION)</scope>
</reference>
<reference key="62">
    <citation type="journal article" date="2019" name="Elife">
        <title>USP49 potently stabilizes APOBEC3G protein by removing ubiquitin and inhibits HIV-1 replication.</title>
        <authorList>
            <person name="Pan T."/>
            <person name="Song Z."/>
            <person name="Wu L."/>
            <person name="Liu G."/>
            <person name="Ma X."/>
            <person name="Peng Z."/>
            <person name="Zhou M."/>
            <person name="Liang L."/>
            <person name="Liu B."/>
            <person name="Liu J."/>
            <person name="Zhang J."/>
            <person name="Zhang X."/>
            <person name="Huang R."/>
            <person name="Zhao J."/>
            <person name="Li Y."/>
            <person name="Ling X."/>
            <person name="Luo Y."/>
            <person name="Tang X."/>
            <person name="Cai W."/>
            <person name="Deng K."/>
            <person name="Li L."/>
            <person name="Zhang H."/>
        </authorList>
    </citation>
    <scope>FUNCTION</scope>
    <scope>DEUBIQUITINATION BY USP49 (MICROBIAL INFECTION)</scope>
</reference>
<reference key="63">
    <citation type="journal article" date="2019" name="Nat. Struct. Mol. Biol.">
        <title>Structural basis of antagonism of human APOBEC3F by HIV-1 Vif.</title>
        <authorList>
            <person name="Hu Y."/>
            <person name="Desimmie B.A."/>
            <person name="Nguyen H.C."/>
            <person name="Ziegler S.J."/>
            <person name="Cheng T.C."/>
            <person name="Chen J."/>
            <person name="Wang J."/>
            <person name="Wang H."/>
            <person name="Zhang K."/>
            <person name="Pathak V.K."/>
            <person name="Xiong Y."/>
        </authorList>
    </citation>
    <scope>INTERACTION WITH APOBEC3F</scope>
</reference>
<reference key="64">
    <citation type="journal article" date="2008" name="Nature">
        <title>Structure of the DNA deaminase domain of the HIV-1 restriction factor APOBEC3G.</title>
        <authorList>
            <person name="Chen K.M."/>
            <person name="Harjes E."/>
            <person name="Gross P.J."/>
            <person name="Fahmy A."/>
            <person name="Lu Y."/>
            <person name="Shindo K."/>
            <person name="Harris R.S."/>
            <person name="Matsuo H."/>
        </authorList>
    </citation>
    <scope>STRUCTURE BY NMR OF 198-384 IN COMPLEX WITH ZINC</scope>
    <scope>CATALYTIC ACTIVITY</scope>
    <scope>COFACTOR</scope>
    <scope>FUNCTION</scope>
    <scope>ACTIVE SITE</scope>
    <scope>MUTAGENESIS OF ARG-213; ARG-215; GLU-259; TRP-285; ARG-313 AND ARG-320</scope>
</reference>
<reference key="65">
    <citation type="journal article" date="2008" name="Nature">
        <title>Crystal structure of the anti-viral APOBEC3G catalytic domain and functional implications.</title>
        <authorList>
            <person name="Holden L.G."/>
            <person name="Prochnow C."/>
            <person name="Chang Y.P."/>
            <person name="Bransteitter R."/>
            <person name="Chelico L."/>
            <person name="Sen U."/>
            <person name="Stevens R.C."/>
            <person name="Goodman M.F."/>
            <person name="Chen X.S."/>
        </authorList>
    </citation>
    <scope>X-RAY CRYSTALLOGRAPHY (2.30 ANGSTROMS) OF 197-380 IN COMPLEX WITH ZINC</scope>
    <scope>FUNCTION</scope>
    <scope>CATALYTIC ACTIVITY</scope>
    <scope>ACTIVE SITE</scope>
    <scope>COFACTOR</scope>
    <scope>MUTAGENESIS OF ARG-213; ARG-215; ASN-244; TRP-285 AND TYR-315</scope>
</reference>
<reference key="66">
    <citation type="journal article" date="2009" name="EMBO J.">
        <title>Structure, interaction and real-time monitoring of the enzymatic reaction of wild-type APOBEC3G.</title>
        <authorList>
            <person name="Furukawa A."/>
            <person name="Nagata T."/>
            <person name="Matsugami A."/>
            <person name="Habu Y."/>
            <person name="Sugiyama R."/>
            <person name="Hayashi F."/>
            <person name="Kobayashi N."/>
            <person name="Yokoyama S."/>
            <person name="Takaku H."/>
            <person name="Katahira M."/>
        </authorList>
    </citation>
    <scope>STRUCTURE BY NMR OF 193-384 IN COMPLEX WITH ZINC</scope>
    <scope>FUNCTION</scope>
    <scope>CATALYTIC ACTIVITY</scope>
    <scope>ACTIVE SITE</scope>
    <scope>COFACTOR</scope>
</reference>
<reference key="67">
    <citation type="journal article" date="2012" name="ACS Chem. Biol.">
        <title>First-in-class small molecule inhibitors of the single-strand DNA cytosine deaminase APOBEC3G.</title>
        <authorList>
            <person name="Li M."/>
            <person name="Shandilya S.M."/>
            <person name="Carpenter M.A."/>
            <person name="Rathore A."/>
            <person name="Brown W.L."/>
            <person name="Perkins A.L."/>
            <person name="Harki D.A."/>
            <person name="Solberg J."/>
            <person name="Hook D.J."/>
            <person name="Pandey K.K."/>
            <person name="Parniak M.A."/>
            <person name="Johnson J.R."/>
            <person name="Krogan N.J."/>
            <person name="Somasundaran M."/>
            <person name="Ali A."/>
            <person name="Schiffer C.A."/>
            <person name="Harris R.S."/>
        </authorList>
    </citation>
    <scope>X-RAY CRYSTALLOGRAPHY (1.38 ANGSTROMS) OF 191-380</scope>
</reference>
<reference evidence="62 63" key="68">
    <citation type="journal article" date="2015" name="J. Biol. Chem.">
        <title>Crystal structure of DNA cytidine deaminase ABOBEC3G catalytic deamination domain suggests a binding mode of full-length enzyme to single-stranded DNA.</title>
        <authorList>
            <person name="Lu X."/>
            <person name="Zhang T."/>
            <person name="Xu Z."/>
            <person name="Liu S."/>
            <person name="Zhao B."/>
            <person name="Lan W."/>
            <person name="Wang C."/>
            <person name="Ding J."/>
            <person name="Cao C."/>
        </authorList>
    </citation>
    <scope>X-RAY CRYSTALLOGRAPHY (1.70 ANGSTROMS) OF 193-384 IN COMPLEX WITH ZINC</scope>
    <scope>FUNCTION</scope>
    <scope>CATALYTIC ACTIVITY</scope>
    <scope>BIOPHYSICOCHEMICAL PROPERTIES</scope>
    <scope>SUBUNIT</scope>
    <scope>ACTIVE SITE</scope>
    <scope>COFACTOR</scope>
    <scope>MUTAGENESIS OF PRO-210; GLN-245; HIS-248; HIS-250; ARG-256; ASP-264; PHE-268; ASP-370; ARG-374; ARG-376 AND GLN-380</scope>
</reference>
<reference evidence="64 65 66" key="69">
    <citation type="journal article" date="2023" name="Nature">
        <title>The structural basis for HIV-1 Vif antagonism of human APOBEC3G.</title>
        <authorList>
            <person name="Li Y.L."/>
            <person name="Langley C.A."/>
            <person name="Azumaya C.M."/>
            <person name="Echeverria I."/>
            <person name="Chesarino N.M."/>
            <person name="Emerman M."/>
            <person name="Cheng Y."/>
            <person name="Gross J.D."/>
        </authorList>
    </citation>
    <scope>STRUCTURE BY ELECTRON MICROSCOPY (2.70 ANGSTROMS) IN COMPLEX WITH ZINC; CBFB; CUL5; ELOB; ELOC AND HIV-1 VIF</scope>
    <scope>COFACTOR</scope>
    <scope>ACTIVE SITE</scope>
    <scope>ACTIVITY REGULATION (MICROBIAL INFECTION)</scope>
    <scope>UBIQUITINATION (MICROBIAL INFECTION)</scope>
    <scope>INTERACTION WITH HIV-1 VIF (MICROBIAL INFECTION)</scope>
</reference>
<reference evidence="67 68" key="70">
    <citation type="journal article" date="2023" name="Nat. Commun.">
        <title>Structural insights into RNA bridging between HIV-1 Vif and antiviral factor APOBEC3G.</title>
        <authorList>
            <person name="Kouno T."/>
            <person name="Shibata S."/>
            <person name="Shigematsu M."/>
            <person name="Hyun J."/>
            <person name="Kim T.G."/>
            <person name="Matsuo H."/>
            <person name="Wolf M."/>
        </authorList>
    </citation>
    <scope>STRUCTURE BY ELECTRON MICROSCOPY (2.50 ANGSTROMS) OF 11-384 IN COMPLEX WITH ZINC; CBFB AND HIV-1 VIF</scope>
    <scope>COFACTOR</scope>
    <scope>ACTIVITY REGULATION (MICROBIAL INFECTION)</scope>
    <scope>UBIQUITINATION (MICROBIAL INFECTION)</scope>
    <scope>INTERACTION WITH HIV-1 VIF (MICROBIAL INFECTION)</scope>
    <scope>MUTAGENESIS OF ASP-128; 297-LYS--LYS-303 AND LYS-334</scope>
</reference>
<dbReference type="EC" id="3.5.4.38" evidence="4 21 25 26 46"/>
<dbReference type="EMBL" id="AK022802">
    <property type="status" value="NOT_ANNOTATED_CDS"/>
    <property type="molecule type" value="mRNA"/>
</dbReference>
<dbReference type="EMBL" id="AK315650">
    <property type="protein sequence ID" value="BAG38016.1"/>
    <property type="molecule type" value="mRNA"/>
</dbReference>
<dbReference type="EMBL" id="AF182420">
    <property type="protein sequence ID" value="AAG14956.1"/>
    <property type="molecule type" value="mRNA"/>
</dbReference>
<dbReference type="EMBL" id="CR456472">
    <property type="protein sequence ID" value="CAG30358.1"/>
    <property type="molecule type" value="mRNA"/>
</dbReference>
<dbReference type="EMBL" id="DQ147772">
    <property type="protein sequence ID" value="AAZ38722.1"/>
    <property type="molecule type" value="Genomic_DNA"/>
</dbReference>
<dbReference type="EMBL" id="AL022318">
    <property type="status" value="NOT_ANNOTATED_CDS"/>
    <property type="molecule type" value="Genomic_DNA"/>
</dbReference>
<dbReference type="EMBL" id="AL078641">
    <property type="status" value="NOT_ANNOTATED_CDS"/>
    <property type="molecule type" value="Genomic_DNA"/>
</dbReference>
<dbReference type="EMBL" id="CH471095">
    <property type="protein sequence ID" value="EAW60292.1"/>
    <property type="molecule type" value="Genomic_DNA"/>
</dbReference>
<dbReference type="EMBL" id="BC024268">
    <property type="protein sequence ID" value="AAH24268.1"/>
    <property type="molecule type" value="mRNA"/>
</dbReference>
<dbReference type="EMBL" id="BC061914">
    <property type="protein sequence ID" value="AAH61914.1"/>
    <property type="molecule type" value="mRNA"/>
</dbReference>
<dbReference type="CCDS" id="CCDS13984.1">
    <molecule id="Q9HC16-1"/>
</dbReference>
<dbReference type="RefSeq" id="NP_068594.1">
    <molecule id="Q9HC16-1"/>
    <property type="nucleotide sequence ID" value="NM_021822.4"/>
</dbReference>
<dbReference type="PDB" id="2JYW">
    <property type="method" value="NMR"/>
    <property type="chains" value="A=198-384"/>
</dbReference>
<dbReference type="PDB" id="2KBO">
    <property type="method" value="NMR"/>
    <property type="chains" value="A=193-384"/>
</dbReference>
<dbReference type="PDB" id="2KEM">
    <property type="method" value="NMR"/>
    <property type="chains" value="A=191-384"/>
</dbReference>
<dbReference type="PDB" id="3E1U">
    <property type="method" value="X-ray"/>
    <property type="resolution" value="2.30 A"/>
    <property type="chains" value="A=197-380"/>
</dbReference>
<dbReference type="PDB" id="3IQS">
    <property type="method" value="X-ray"/>
    <property type="resolution" value="2.30 A"/>
    <property type="chains" value="A=197-380"/>
</dbReference>
<dbReference type="PDB" id="3IR2">
    <property type="method" value="X-ray"/>
    <property type="resolution" value="2.25 A"/>
    <property type="chains" value="A/B=191-384"/>
</dbReference>
<dbReference type="PDB" id="3V4J">
    <property type="method" value="X-ray"/>
    <property type="resolution" value="2.04 A"/>
    <property type="chains" value="A/B=191-384"/>
</dbReference>
<dbReference type="PDB" id="3V4K">
    <property type="method" value="X-ray"/>
    <property type="resolution" value="1.38 A"/>
    <property type="chains" value="A/B=191-380"/>
</dbReference>
<dbReference type="PDB" id="4ROV">
    <property type="method" value="X-ray"/>
    <property type="resolution" value="1.80 A"/>
    <property type="chains" value="A/B=193-384"/>
</dbReference>
<dbReference type="PDB" id="4ROW">
    <property type="method" value="X-ray"/>
    <property type="resolution" value="1.70 A"/>
    <property type="chains" value="A=193-384"/>
</dbReference>
<dbReference type="PDB" id="5ZVA">
    <property type="method" value="X-ray"/>
    <property type="resolution" value="2.30 A"/>
    <property type="chains" value="A/B=198-221"/>
</dbReference>
<dbReference type="PDB" id="5ZVB">
    <property type="method" value="X-ray"/>
    <property type="resolution" value="2.00 A"/>
    <property type="chains" value="A/B=198-221"/>
</dbReference>
<dbReference type="PDB" id="6BUX">
    <property type="method" value="X-ray"/>
    <property type="resolution" value="1.86 A"/>
    <property type="chains" value="A=189-384"/>
</dbReference>
<dbReference type="PDB" id="6BWY">
    <property type="method" value="X-ray"/>
    <property type="resolution" value="2.90 A"/>
    <property type="chains" value="A/B/E/G=195-384"/>
</dbReference>
<dbReference type="PDB" id="6K3J">
    <property type="method" value="NMR"/>
    <property type="chains" value="A=197-384"/>
</dbReference>
<dbReference type="PDB" id="6K3K">
    <property type="method" value="NMR"/>
    <property type="chains" value="A=197-384"/>
</dbReference>
<dbReference type="PDB" id="7UXD">
    <property type="method" value="X-ray"/>
    <property type="resolution" value="1.50 A"/>
    <property type="chains" value="A=191-384"/>
</dbReference>
<dbReference type="PDB" id="8CX0">
    <property type="method" value="EM"/>
    <property type="resolution" value="2.70 A"/>
    <property type="chains" value="A=1-384"/>
</dbReference>
<dbReference type="PDB" id="8CX1">
    <property type="method" value="EM"/>
    <property type="resolution" value="3.30 A"/>
    <property type="chains" value="A/F=1-384"/>
</dbReference>
<dbReference type="PDB" id="8CX2">
    <property type="method" value="EM"/>
    <property type="resolution" value="3.20 A"/>
    <property type="chains" value="A/F=1-384"/>
</dbReference>
<dbReference type="PDB" id="8H0I">
    <property type="method" value="EM"/>
    <property type="resolution" value="2.80 A"/>
    <property type="chains" value="A/B=11-384"/>
</dbReference>
<dbReference type="PDB" id="8J62">
    <property type="method" value="EM"/>
    <property type="resolution" value="2.50 A"/>
    <property type="chains" value="A/B=11-384"/>
</dbReference>
<dbReference type="PDBsum" id="2JYW"/>
<dbReference type="PDBsum" id="2KBO"/>
<dbReference type="PDBsum" id="2KEM"/>
<dbReference type="PDBsum" id="3E1U"/>
<dbReference type="PDBsum" id="3IQS"/>
<dbReference type="PDBsum" id="3IR2"/>
<dbReference type="PDBsum" id="3V4J"/>
<dbReference type="PDBsum" id="3V4K"/>
<dbReference type="PDBsum" id="4ROV"/>
<dbReference type="PDBsum" id="4ROW"/>
<dbReference type="PDBsum" id="5ZVA"/>
<dbReference type="PDBsum" id="5ZVB"/>
<dbReference type="PDBsum" id="6BUX"/>
<dbReference type="PDBsum" id="6BWY"/>
<dbReference type="PDBsum" id="6K3J"/>
<dbReference type="PDBsum" id="6K3K"/>
<dbReference type="PDBsum" id="7UXD"/>
<dbReference type="PDBsum" id="8CX0"/>
<dbReference type="PDBsum" id="8CX1"/>
<dbReference type="PDBsum" id="8CX2"/>
<dbReference type="PDBsum" id="8H0I"/>
<dbReference type="PDBsum" id="8J62"/>
<dbReference type="EMDB" id="EMD-27032"/>
<dbReference type="EMDB" id="EMD-27033"/>
<dbReference type="EMDB" id="EMD-27034"/>
<dbReference type="EMDB" id="EMD-34412"/>
<dbReference type="EMDB" id="EMD-35999"/>
<dbReference type="SASBDB" id="Q9HC16"/>
<dbReference type="SMR" id="Q9HC16"/>
<dbReference type="BioGRID" id="121920">
    <property type="interactions" value="29"/>
</dbReference>
<dbReference type="DIP" id="DIP-37519N"/>
<dbReference type="FunCoup" id="Q9HC16">
    <property type="interactions" value="71"/>
</dbReference>
<dbReference type="IntAct" id="Q9HC16">
    <property type="interactions" value="11"/>
</dbReference>
<dbReference type="STRING" id="9606.ENSP00000385057"/>
<dbReference type="BindingDB" id="Q9HC16"/>
<dbReference type="ChEMBL" id="CHEMBL1741217"/>
<dbReference type="iPTMnet" id="Q9HC16"/>
<dbReference type="PhosphoSitePlus" id="Q9HC16"/>
<dbReference type="SwissPalm" id="Q9HC16"/>
<dbReference type="BioMuta" id="APOBEC3G"/>
<dbReference type="DMDM" id="44887683"/>
<dbReference type="jPOST" id="Q9HC16"/>
<dbReference type="MassIVE" id="Q9HC16"/>
<dbReference type="PaxDb" id="9606-ENSP00000385057"/>
<dbReference type="PeptideAtlas" id="Q9HC16"/>
<dbReference type="ProteomicsDB" id="81623">
    <molecule id="Q9HC16-1"/>
</dbReference>
<dbReference type="ProteomicsDB" id="81624">
    <molecule id="Q9HC16-3"/>
</dbReference>
<dbReference type="Pumba" id="Q9HC16"/>
<dbReference type="Antibodypedia" id="34782">
    <property type="antibodies" value="616 antibodies from 39 providers"/>
</dbReference>
<dbReference type="DNASU" id="60489"/>
<dbReference type="Ensembl" id="ENST00000407997.4">
    <molecule id="Q9HC16-1"/>
    <property type="protein sequence ID" value="ENSP00000385057.3"/>
    <property type="gene ID" value="ENSG00000239713.9"/>
</dbReference>
<dbReference type="GeneID" id="60489"/>
<dbReference type="KEGG" id="hsa:60489"/>
<dbReference type="MANE-Select" id="ENST00000407997.4">
    <property type="protein sequence ID" value="ENSP00000385057.3"/>
    <property type="RefSeq nucleotide sequence ID" value="NM_021822.4"/>
    <property type="RefSeq protein sequence ID" value="NP_068594.1"/>
</dbReference>
<dbReference type="UCSC" id="uc003awx.3">
    <molecule id="Q9HC16-1"/>
    <property type="organism name" value="human"/>
</dbReference>
<dbReference type="AGR" id="HGNC:17357"/>
<dbReference type="CTD" id="60489"/>
<dbReference type="DisGeNET" id="60489"/>
<dbReference type="GeneCards" id="APOBEC3G"/>
<dbReference type="HGNC" id="HGNC:17357">
    <property type="gene designation" value="APOBEC3G"/>
</dbReference>
<dbReference type="HPA" id="ENSG00000239713">
    <property type="expression patterns" value="Tissue enhanced (lymphoid)"/>
</dbReference>
<dbReference type="MIM" id="607113">
    <property type="type" value="gene"/>
</dbReference>
<dbReference type="neXtProt" id="NX_Q9HC16"/>
<dbReference type="OpenTargets" id="ENSG00000239713"/>
<dbReference type="PharmGKB" id="PA24897"/>
<dbReference type="VEuPathDB" id="HostDB:ENSG00000239713"/>
<dbReference type="eggNOG" id="KOG4075">
    <property type="taxonomic scope" value="Eukaryota"/>
</dbReference>
<dbReference type="GeneTree" id="ENSGT00940000161999"/>
<dbReference type="HOGENOM" id="CLU_047918_0_0_1"/>
<dbReference type="InParanoid" id="Q9HC16"/>
<dbReference type="OMA" id="FLCNQAP"/>
<dbReference type="OrthoDB" id="9445293at2759"/>
<dbReference type="PAN-GO" id="Q9HC16">
    <property type="GO annotations" value="12 GO annotations based on evolutionary models"/>
</dbReference>
<dbReference type="PhylomeDB" id="Q9HC16"/>
<dbReference type="TreeFam" id="TF331356"/>
<dbReference type="BRENDA" id="3.5.4.38">
    <property type="organism ID" value="2681"/>
</dbReference>
<dbReference type="BRENDA" id="3.5.4.B9">
    <property type="organism ID" value="2681"/>
</dbReference>
<dbReference type="PathwayCommons" id="Q9HC16"/>
<dbReference type="Reactome" id="R-HSA-180585">
    <property type="pathway name" value="Vif-mediated degradation of APOBEC3G"/>
</dbReference>
<dbReference type="Reactome" id="R-HSA-180689">
    <property type="pathway name" value="APOBEC3G mediated resistance to HIV-1 infection"/>
</dbReference>
<dbReference type="SignaLink" id="Q9HC16"/>
<dbReference type="SIGNOR" id="Q9HC16"/>
<dbReference type="BioGRID-ORCS" id="60489">
    <property type="hits" value="17 hits in 1171 CRISPR screens"/>
</dbReference>
<dbReference type="CD-CODE" id="232F8A39">
    <property type="entry name" value="P-body"/>
</dbReference>
<dbReference type="CD-CODE" id="DEE660B4">
    <property type="entry name" value="Stress granule"/>
</dbReference>
<dbReference type="ChiTaRS" id="APOBEC3G">
    <property type="organism name" value="human"/>
</dbReference>
<dbReference type="EvolutionaryTrace" id="Q9HC16"/>
<dbReference type="GeneWiki" id="APOBEC3G"/>
<dbReference type="GenomeRNAi" id="60489"/>
<dbReference type="Pharos" id="Q9HC16">
    <property type="development level" value="Tchem"/>
</dbReference>
<dbReference type="PRO" id="PR:Q9HC16"/>
<dbReference type="Proteomes" id="UP000005640">
    <property type="component" value="Chromosome 22"/>
</dbReference>
<dbReference type="RNAct" id="Q9HC16">
    <property type="molecule type" value="protein"/>
</dbReference>
<dbReference type="Bgee" id="ENSG00000239713">
    <property type="expression patterns" value="Expressed in granulocyte and 188 other cell types or tissues"/>
</dbReference>
<dbReference type="GO" id="GO:0030895">
    <property type="term" value="C:apolipoprotein B mRNA editing enzyme complex"/>
    <property type="evidence" value="ECO:0000304"/>
    <property type="project" value="HGNC-UCL"/>
</dbReference>
<dbReference type="GO" id="GO:0005737">
    <property type="term" value="C:cytoplasm"/>
    <property type="evidence" value="ECO:0000314"/>
    <property type="project" value="UniProtKB"/>
</dbReference>
<dbReference type="GO" id="GO:0005829">
    <property type="term" value="C:cytosol"/>
    <property type="evidence" value="ECO:0000304"/>
    <property type="project" value="Reactome"/>
</dbReference>
<dbReference type="GO" id="GO:0005634">
    <property type="term" value="C:nucleus"/>
    <property type="evidence" value="ECO:0000318"/>
    <property type="project" value="GO_Central"/>
</dbReference>
<dbReference type="GO" id="GO:0000932">
    <property type="term" value="C:P-body"/>
    <property type="evidence" value="ECO:0000314"/>
    <property type="project" value="UniProtKB"/>
</dbReference>
<dbReference type="GO" id="GO:1990904">
    <property type="term" value="C:ribonucleoprotein complex"/>
    <property type="evidence" value="ECO:0000314"/>
    <property type="project" value="UniProtKB"/>
</dbReference>
<dbReference type="GO" id="GO:0004126">
    <property type="term" value="F:cytidine deaminase activity"/>
    <property type="evidence" value="ECO:0000314"/>
    <property type="project" value="UniProtKB"/>
</dbReference>
<dbReference type="GO" id="GO:0008829">
    <property type="term" value="F:dCTP deaminase activity"/>
    <property type="evidence" value="ECO:0000304"/>
    <property type="project" value="Reactome"/>
</dbReference>
<dbReference type="GO" id="GO:0042802">
    <property type="term" value="F:identical protein binding"/>
    <property type="evidence" value="ECO:0000353"/>
    <property type="project" value="UniProtKB"/>
</dbReference>
<dbReference type="GO" id="GO:0003723">
    <property type="term" value="F:RNA binding"/>
    <property type="evidence" value="ECO:0000314"/>
    <property type="project" value="UniProtKB"/>
</dbReference>
<dbReference type="GO" id="GO:0008270">
    <property type="term" value="F:zinc ion binding"/>
    <property type="evidence" value="ECO:0000314"/>
    <property type="project" value="UniProtKB"/>
</dbReference>
<dbReference type="GO" id="GO:0016553">
    <property type="term" value="P:base conversion or substitution editing"/>
    <property type="evidence" value="ECO:0000304"/>
    <property type="project" value="HGNC-UCL"/>
</dbReference>
<dbReference type="GO" id="GO:0009972">
    <property type="term" value="P:cytidine deamination"/>
    <property type="evidence" value="ECO:0000314"/>
    <property type="project" value="UniProtKB"/>
</dbReference>
<dbReference type="GO" id="GO:0016554">
    <property type="term" value="P:cytidine to uridine editing"/>
    <property type="evidence" value="ECO:0000318"/>
    <property type="project" value="GO_Central"/>
</dbReference>
<dbReference type="GO" id="GO:0051607">
    <property type="term" value="P:defense response to virus"/>
    <property type="evidence" value="ECO:0000314"/>
    <property type="project" value="UniProtKB"/>
</dbReference>
<dbReference type="GO" id="GO:0070383">
    <property type="term" value="P:DNA cytosine deamination"/>
    <property type="evidence" value="ECO:0000314"/>
    <property type="project" value="UniProtKB"/>
</dbReference>
<dbReference type="GO" id="GO:0045087">
    <property type="term" value="P:innate immune response"/>
    <property type="evidence" value="ECO:0000314"/>
    <property type="project" value="HGNC-UCL"/>
</dbReference>
<dbReference type="GO" id="GO:0045869">
    <property type="term" value="P:negative regulation of single stranded viral RNA replication via double stranded DNA intermediate"/>
    <property type="evidence" value="ECO:0000314"/>
    <property type="project" value="UniProtKB"/>
</dbReference>
<dbReference type="GO" id="GO:0045071">
    <property type="term" value="P:negative regulation of viral genome replication"/>
    <property type="evidence" value="ECO:0000314"/>
    <property type="project" value="UniProtKB"/>
</dbReference>
<dbReference type="GO" id="GO:0048525">
    <property type="term" value="P:negative regulation of viral process"/>
    <property type="evidence" value="ECO:0000314"/>
    <property type="project" value="HGNC-UCL"/>
</dbReference>
<dbReference type="GO" id="GO:0002230">
    <property type="term" value="P:positive regulation of defense response to virus by host"/>
    <property type="evidence" value="ECO:0000314"/>
    <property type="project" value="HGNC-UCL"/>
</dbReference>
<dbReference type="GO" id="GO:0010526">
    <property type="term" value="P:transposable element silencing"/>
    <property type="evidence" value="ECO:0000314"/>
    <property type="project" value="UniProtKB"/>
</dbReference>
<dbReference type="CDD" id="cd01283">
    <property type="entry name" value="cytidine_deaminase"/>
    <property type="match status" value="2"/>
</dbReference>
<dbReference type="FunFam" id="3.40.140.10:FF:000029">
    <property type="entry name" value="DNA dC-&gt;dU-editing enzyme APOBEC-3G"/>
    <property type="match status" value="2"/>
</dbReference>
<dbReference type="Gene3D" id="3.40.140.10">
    <property type="entry name" value="Cytidine Deaminase, domain 2"/>
    <property type="match status" value="2"/>
</dbReference>
<dbReference type="InterPro" id="IPR016192">
    <property type="entry name" value="APOBEC/CMP_deaminase_Zn-bd"/>
</dbReference>
<dbReference type="InterPro" id="IPR050610">
    <property type="entry name" value="APOBEC_Cyt_Deaminase"/>
</dbReference>
<dbReference type="InterPro" id="IPR002125">
    <property type="entry name" value="CMP_dCMP_dom"/>
</dbReference>
<dbReference type="InterPro" id="IPR016193">
    <property type="entry name" value="Cytidine_deaminase-like"/>
</dbReference>
<dbReference type="PANTHER" id="PTHR13857:SF20">
    <property type="entry name" value="DNA DC-DU-EDITING ENZYME APOBEC-3G"/>
    <property type="match status" value="1"/>
</dbReference>
<dbReference type="PANTHER" id="PTHR13857">
    <property type="entry name" value="MRNA EDITING ENZYME"/>
    <property type="match status" value="1"/>
</dbReference>
<dbReference type="Pfam" id="PF18782">
    <property type="entry name" value="NAD2"/>
    <property type="match status" value="2"/>
</dbReference>
<dbReference type="SUPFAM" id="SSF53927">
    <property type="entry name" value="Cytidine deaminase-like"/>
    <property type="match status" value="1"/>
</dbReference>
<dbReference type="PROSITE" id="PS00903">
    <property type="entry name" value="CYT_DCMP_DEAMINASES_1"/>
    <property type="match status" value="1"/>
</dbReference>
<dbReference type="PROSITE" id="PS51747">
    <property type="entry name" value="CYT_DCMP_DEAMINASES_2"/>
    <property type="match status" value="2"/>
</dbReference>
<gene>
    <name evidence="53 61" type="primary">APOBEC3G</name>
    <name type="ORF">MDS019</name>
</gene>
<comment type="function">
    <text evidence="3 4 5 6 7 8 10 12 13 15 17 20 21 25 26 27 29 31 33 36 39 40 41 43 44 46 48 55">DNA deaminase (cytidine deaminase) which acts as an inhibitor of retrovirus replication and retrotransposon mobility via deaminase-dependent and -independent mechanisms (PubMed:12808465, PubMed:16527742, PubMed:17121840, PubMed:18288108, PubMed:18849968, PubMed:19153609, PubMed:21123384, PubMed:22791714, PubMed:25542899). Exhibits potent antiviral activity against Vif-deficient HIV-1 (PubMed:12167863, PubMed:12859895, PubMed:14557625, PubMed:20219927, PubMed:21835787, PubMed:22807680, PubMed:22915799, PubMed:23097438, PubMed:23152537, PubMed:31397674). After the penetration of retroviral nucleocapsids into target cells of infection and the initiation of reverse transcription, it can induce the conversion of cytosine to uracil in the minus-sense single-strand viral DNA, leading to G-to-A hypermutations in the subsequent plus-strand viral DNA (PubMed:12808465, PubMed:12808466, PubMed:12809610, PubMed:12970355, PubMed:14528300, PubMed:22807680). The resultant detrimental levels of mutations in the proviral genome, along with a deamination-independent mechanism that works prior to the proviral integration, together exert efficient antiretroviral effects in infected target cells (PubMed:12808465, PubMed:12808466, PubMed:12809610, PubMed:12970355, PubMed:14528300). Selectively targets single-stranded DNA and does not deaminate double-stranded DNA or single- or double-stranded RNA (PubMed:12808465, PubMed:12809610, PubMed:12970355, PubMed:14528300). Exhibits antiviral activity also against simian immunodeficiency viruses (SIVs), hepatitis B virus (HBV), equine infectious anemia virus (EIAV), xenotropic MuLV-related virus (XMRV) and simian foamy virus (SFV) (PubMed:15031497, PubMed:16378963, PubMed:18448976, PubMed:19458006, PubMed:20335265). May inhibit the mobility of LTR and non-LTR retrotransposons (PubMed:16527742).</text>
</comment>
<comment type="catalytic activity">
    <reaction evidence="4 21 25 26 46">
        <text>a 2'-deoxycytidine in single-stranded DNA + H2O + H(+) = a 2'-deoxyuridine in single-stranded DNA + NH4(+)</text>
        <dbReference type="Rhea" id="RHEA:50948"/>
        <dbReference type="Rhea" id="RHEA-COMP:12846"/>
        <dbReference type="Rhea" id="RHEA-COMP:12847"/>
        <dbReference type="ChEBI" id="CHEBI:15377"/>
        <dbReference type="ChEBI" id="CHEBI:15378"/>
        <dbReference type="ChEBI" id="CHEBI:28938"/>
        <dbReference type="ChEBI" id="CHEBI:85452"/>
        <dbReference type="ChEBI" id="CHEBI:133902"/>
        <dbReference type="EC" id="3.5.4.38"/>
    </reaction>
</comment>
<comment type="cofactor">
    <cofactor evidence="4 21 25 26 46 50 51">
        <name>Zn(2+)</name>
        <dbReference type="ChEBI" id="CHEBI:29105"/>
    </cofactor>
</comment>
<comment type="activity regulation">
    <text evidence="36 37 50 51">(Microbial infection) Antiviral activity is neutralized by the HIV-1 virion infectivity factor (Vif), that prevents its incorporation into progeny virions by both inhibiting its translation and/or by inducing its ubiquitination and subsequent degradation by the 26S proteasome (PubMed:21835787, PubMed:22190037, PubMed:36754086, PubMed:37419875). Can also be neutralized by simian immunodeficiency virus sooty mangabey monkey virus (SIV-sm) and chimpanzee immunodeficiency virus (SIV-cpz) Vif (PubMed:21835787).</text>
</comment>
<comment type="biophysicochemical properties">
    <kinetics>
        <KM evidence="46">20.42 uM for 2'-deoxycytidine in single-stranded DNA</KM>
        <text evidence="46">kcat is 0.11 min(-1) with 2'-deoxycytidine in single-stranded DNA as substrate.</text>
    </kinetics>
</comment>
<comment type="subunit">
    <text evidence="2 18 19 23 24 39 41 46 49">Homodimer (PubMed:11863358, PubMed:17020885, PubMed:18842592, PubMed:25542899). Homooligomer (PubMed:11863358, PubMed:17020885, PubMed:18842592). Can bind RNA to form ribonucleoprotein complexes of high-molecular-mass (HMM) or low-molecular-mass (LMM) (PubMed:11863358, PubMed:17020885, PubMed:18842592). HMM is inactive and heterogeneous in protein composition because of binding nonselectively to cellular RNAs, which in turn are associated with variety of cellular proteins (PubMed:11863358, PubMed:17020885, PubMed:18842592). The LMM form which is enzymatically active has few or no RNAs associated (PubMed:11863358, PubMed:17020885, PubMed:18842592). Its ability to form homooligomer is distinct from its ability to assemble into HMM (PubMed:11863358, PubMed:17020885, PubMed:18842592). Interacts with APOBEC3B, APOBEC3F, MOV10, AGO2, EIF4E, EIF4ENIF1, DCP2 and DDX6 in an RNA-dependent manner (PubMed:16699599, PubMed:22791714, PubMed:31792451). Interacts with AGO1, AGO3 and PKA/PRKACA (PubMed:18836454, PubMed:22915799).</text>
</comment>
<comment type="subunit">
    <text evidence="7 9 11 37 42 50 51">(Microbial infection) Interacts with HIV-1 Vif; promoting its ubiquitination by a cullin-5-RING E3 ubiquitin-protein ligase complex (ECS complex) hijacked by the HIV-1 Vif.</text>
</comment>
<comment type="subunit">
    <text evidence="38">(Microbial infection) Interacts with HIV-1 reverse transcriptase/ribonuclease H.</text>
</comment>
<comment type="subunit">
    <text evidence="32">(Microbial infection) Interacts with hepatitis B virus capsid protein.</text>
</comment>
<comment type="interaction">
    <interactant intactId="EBI-717839">
        <id>Q9HC16</id>
    </interactant>
    <interactant intactId="EBI-717839">
        <id>Q9HC16</id>
        <label>APOBEC3G</label>
    </interactant>
    <organismsDiffer>false</organismsDiffer>
    <experiments>2</experiments>
</comment>
<comment type="interaction">
    <interactant intactId="EBI-717839">
        <id>Q9HC16</id>
    </interactant>
    <interactant intactId="EBI-476586">
        <id>P17612</id>
        <label>PRKACA</label>
    </interactant>
    <organismsDiffer>false</organismsDiffer>
    <experiments>6</experiments>
</comment>
<comment type="interaction">
    <interactant intactId="EBI-717839">
        <id>Q9HC16</id>
    </interactant>
    <interactant intactId="EBI-15528966">
        <id>P69723</id>
        <label>vif</label>
    </interactant>
    <organismsDiffer>true</organismsDiffer>
    <experiments>3</experiments>
</comment>
<comment type="interaction">
    <interactant intactId="EBI-717839">
        <id>Q9HC16</id>
    </interactant>
    <interactant intactId="EBI-15731903">
        <id>Q77YG0</id>
        <label>vif</label>
    </interactant>
    <organismsDiffer>true</organismsDiffer>
    <experiments>2</experiments>
</comment>
<comment type="subcellular location">
    <subcellularLocation>
        <location evidence="5 17 18 22 35 36">Cytoplasm</location>
    </subcellularLocation>
    <subcellularLocation>
        <location evidence="22">Nucleus</location>
    </subcellularLocation>
    <subcellularLocation>
        <location evidence="18 41">Cytoplasm</location>
        <location evidence="18 41">P-body</location>
    </subcellularLocation>
    <text evidence="7 17 18 22 36">Mainly cytoplasmic (PubMed:16527742, PubMed:16699599, PubMed:21835787). Small amount are found in the nucleus (PubMed:18667511). During HIV-1 infection, virion-encapsidated in absence of HIV-1 Vif (PubMed:12859895).</text>
</comment>
<comment type="alternative products">
    <event type="alternative splicing"/>
    <isoform>
        <id>Q9HC16-1</id>
        <name>1</name>
        <sequence type="displayed"/>
    </isoform>
    <isoform>
        <id>Q9HC16-3</id>
        <name>3</name>
        <sequence type="described" ref="VSP_009588 VSP_009589"/>
    </isoform>
</comment>
<comment type="tissue specificity">
    <text evidence="2 3 30">Expressed in spleen, testes, ovary and peripheral blood leukocytes and CD4+ lymphocytes. Also expressed in non-permissive peripheral blood mononuclear cells, and several tumor cell lines; no expression detected in permissive lymphoid and non-lymphoid cell lines. Exists only in the LMM form in peripheral blood-derived resting CD4 T-cells and monocytes, both of which are refractory to HIV-1 infection. LMM is converted to a HMM complex when resting CD4 T-cells are activated or when monocytes are induced to differentiate into macrophages. This change correlates with increased susceptibility of these cells to HIV-1 infection.</text>
</comment>
<comment type="induction">
    <text evidence="16">Up-regulated by IFN-alpha.</text>
</comment>
<comment type="domain">
    <text evidence="19 34">The CMP/dCMP deaminase domain 1 mediates RNA binding, RNA-dependent oligomerization and virion incorporation whereas the CMP/dCMP deaminase domain 2 confers deoxycytidine deaminase activity and substrate sequence specificity.</text>
</comment>
<comment type="PTM">
    <text evidence="10 11 28 37 45 47 48 50 51">(Microbial infection) Following infection by HIV-1, ubiquitinated by a cullin-5-RING E3 ubiquitin-protein ligase complex (ECS complex) hijacked by the HIV-1 Vif protein, leading to its degradation (PubMed:14528300, PubMed:14528301, PubMed:19887642, PubMed:22190037, PubMed:23300442, PubMed:31253590, PubMed:36754086, PubMed:37419875). Deubiquitinated by USP49; leading to stabilization (PubMed:31397674).</text>
</comment>
<comment type="PTM">
    <text evidence="23 35">Phosphorylation at Thr-32 reduces its binding to HIV-1 Vif and subsequent ubiquitination and degradation thus promoting its antiviral activity.</text>
</comment>
<comment type="miscellaneous">
    <text evidence="4 40">Accumulation of APOBEC3G induced non-lethal hypermutation could contribute to the genetic variation of primate lentiviral populations.</text>
</comment>
<comment type="miscellaneous">
    <text evidence="2">It is one of seven related genes or pseudogenes found in a cluster, thought to result from gene duplication, on chromosome 22.</text>
</comment>
<comment type="miscellaneous">
    <molecule>Isoform 3</molecule>
    <text evidence="57">May be due to a competing donor splice site.</text>
</comment>
<comment type="similarity">
    <text evidence="57">Belongs to the cytidine and deoxycytidylate deaminase family.</text>
</comment>
<comment type="online information" name="Protein Spotlight">
    <link uri="https://www.proteinspotlight.org/back_issues/045"/>
    <text>Protein wars - Issue 45 of April 2004</text>
</comment>
<accession>Q9HC16</accession>
<accession>B2RDR9</accession>
<accession>Q45F02</accession>
<accession>Q5TF77</accession>
<accession>Q7Z2N1</accession>
<accession>Q7Z2N4</accession>
<accession>Q9H9H8</accession>
<protein>
    <recommendedName>
        <fullName evidence="57">DNA dC-&gt;dU-editing enzyme APOBEC-3G</fullName>
        <ecNumber evidence="4 21 25 26 46">3.5.4.38</ecNumber>
    </recommendedName>
    <alternativeName>
        <fullName>APOBEC-related cytidine deaminase</fullName>
        <shortName>APOBEC-related protein</shortName>
        <shortName>ARCD</shortName>
    </alternativeName>
    <alternativeName>
        <fullName>APOBEC-related protein 9</fullName>
        <shortName>ARP-9</shortName>
    </alternativeName>
    <alternativeName>
        <fullName evidence="53">CEM-15</fullName>
        <shortName evidence="53">CEM15</shortName>
    </alternativeName>
    <alternativeName>
        <fullName>Deoxycytidine deaminase</fullName>
        <shortName evidence="56">A3G</shortName>
    </alternativeName>
</protein>
<sequence length="384" mass="46408">MKPHFRNTVERMYRDTFSYNFYNRPILSRRNTVWLCYEVKTKGPSRPPLDAKIFRGQVYSELKYHPEMRFFHWFSKWRKLHRDQEYEVTWYISWSPCTKCTRDMATFLAEDPKVTLTIFVARLYYFWDPDYQEALRSLCQKRDGPRATMKIMNYDEFQHCWSKFVYSQRELFEPWNNLPKYYILLHIMLGEILRHSMDPPTFTFNFNNEPWVRGRHETYLCYEVERMHNDTWVLLNQRRGFLCNQAPHKHGFLEGRHAELCFLDVIPFWKLDLDQDYRVTCFTSWSPCFSCAQEMAKFISKNKHVSLCIFTARIYDDQGRCQEGLRTLAEAGAKISIMTYSEFKHCWDTFVDHQGCPFQPWDGLDEHSQDLSGRLRAILQNQEN</sequence>
<keyword id="KW-0002">3D-structure</keyword>
<keyword id="KW-0025">Alternative splicing</keyword>
<keyword id="KW-0051">Antiviral defense</keyword>
<keyword id="KW-0963">Cytoplasm</keyword>
<keyword id="KW-0945">Host-virus interaction</keyword>
<keyword id="KW-0378">Hydrolase</keyword>
<keyword id="KW-0391">Immunity</keyword>
<keyword id="KW-0399">Innate immunity</keyword>
<keyword id="KW-1017">Isopeptide bond</keyword>
<keyword id="KW-0479">Metal-binding</keyword>
<keyword id="KW-0539">Nucleus</keyword>
<keyword id="KW-0597">Phosphoprotein</keyword>
<keyword id="KW-1267">Proteomics identification</keyword>
<keyword id="KW-1185">Reference proteome</keyword>
<keyword id="KW-0677">Repeat</keyword>
<keyword id="KW-0832">Ubl conjugation</keyword>
<keyword id="KW-0862">Zinc</keyword>
<feature type="chain" id="PRO_0000171761" description="DNA dC-&gt;dU-editing enzyme APOBEC-3G">
    <location>
        <begin position="1"/>
        <end position="384"/>
    </location>
</feature>
<feature type="domain" description="CMP/dCMP-type deaminase 1" evidence="1">
    <location>
        <begin position="29"/>
        <end position="138"/>
    </location>
</feature>
<feature type="domain" description="CMP/dCMP-type deaminase 2" evidence="1">
    <location>
        <begin position="214"/>
        <end position="328"/>
    </location>
</feature>
<feature type="region of interest" description="Essential for cytoplasmic localization">
    <location>
        <begin position="1"/>
        <end position="60"/>
    </location>
</feature>
<feature type="region of interest" description="Necessary for homooligomerization">
    <location>
        <begin position="209"/>
        <end position="336"/>
    </location>
</feature>
<feature type="region of interest" description="Interaction with DNA" evidence="57">
    <location>
        <begin position="213"/>
        <end position="215"/>
    </location>
</feature>
<feature type="region of interest" description="Interaction with DNA" evidence="57">
    <location>
        <begin position="313"/>
        <end position="320"/>
    </location>
</feature>
<feature type="active site" description="Proton donor" evidence="1 21 25 26 46 50 62 63 64 65">
    <location>
        <position position="259"/>
    </location>
</feature>
<feature type="binding site" evidence="1 50 51 64 65 67 68">
    <location>
        <position position="65"/>
    </location>
    <ligand>
        <name>Zn(2+)</name>
        <dbReference type="ChEBI" id="CHEBI:29105"/>
        <label>1</label>
    </ligand>
</feature>
<feature type="binding site" evidence="1 50 51 64 65 67 68">
    <location>
        <position position="97"/>
    </location>
    <ligand>
        <name>Zn(2+)</name>
        <dbReference type="ChEBI" id="CHEBI:29105"/>
        <label>1</label>
    </ligand>
</feature>
<feature type="binding site" evidence="1 50 51 64 65 67 68">
    <location>
        <position position="100"/>
    </location>
    <ligand>
        <name>Zn(2+)</name>
        <dbReference type="ChEBI" id="CHEBI:29105"/>
        <label>1</label>
    </ligand>
</feature>
<feature type="binding site" evidence="21 25 26 46 50 51 62 63 64 65 67 68">
    <location>
        <position position="257"/>
    </location>
    <ligand>
        <name>Zn(2+)</name>
        <dbReference type="ChEBI" id="CHEBI:29105"/>
        <label>2</label>
        <note>catalytic</note>
    </ligand>
</feature>
<feature type="binding site" evidence="21 25 26 46 50 51 62 63 64 65 67 68">
    <location>
        <position position="288"/>
    </location>
    <ligand>
        <name>Zn(2+)</name>
        <dbReference type="ChEBI" id="CHEBI:29105"/>
        <label>2</label>
        <note>catalytic</note>
    </ligand>
</feature>
<feature type="binding site" evidence="21 25 26 46 50 51 62 63 64 65 67 68">
    <location>
        <position position="291"/>
    </location>
    <ligand>
        <name>Zn(2+)</name>
        <dbReference type="ChEBI" id="CHEBI:29105"/>
        <label>2</label>
        <note>catalytic</note>
    </ligand>
</feature>
<feature type="site" description="Interaction with DNA" evidence="57">
    <location>
        <position position="244"/>
    </location>
</feature>
<feature type="modified residue" description="Phosphothreonine; by PKA" evidence="23 35">
    <location>
        <position position="32"/>
    </location>
</feature>
<feature type="modified residue" description="Phosphothreonine; by PKA and CAMK2" evidence="35">
    <location>
        <position position="218"/>
    </location>
</feature>
<feature type="cross-link" description="(Microbial infection) Glycyl lysine isopeptide (Lys-Gly) (interchain with G-Cter in ubiquitin)" evidence="59">
    <location>
        <position position="42"/>
    </location>
</feature>
<feature type="cross-link" description="(Microbial infection) Glycyl lysine isopeptide (Lys-Gly) (interchain with G-Cter in ubiquitin)" evidence="59">
    <location>
        <position position="52"/>
    </location>
</feature>
<feature type="cross-link" description="(Microbial infection) Glycyl lysine isopeptide (Lys-Gly) (interchain with G-Cter in ubiquitin)" evidence="59 60">
    <location>
        <position position="63"/>
    </location>
</feature>
<feature type="cross-link" description="(Microbial infection) Glycyl lysine isopeptide (Lys-Gly) (interchain with G-Cter in ubiquitin)" evidence="59">
    <location>
        <position position="150"/>
    </location>
</feature>
<feature type="cross-link" description="(Microbial infection) Glycyl lysine isopeptide (Lys-Gly) (interchain with G-Cter in ubiquitin)" evidence="59">
    <location>
        <position position="163"/>
    </location>
</feature>
<feature type="cross-link" description="(Microbial infection) Glycyl lysine isopeptide (Lys-Gly) (interchain with G-Cter in ubiquitin)" evidence="59 60">
    <location>
        <position position="249"/>
    </location>
</feature>
<feature type="cross-link" description="(Microbial infection) Glycyl lysine isopeptide (Lys-Gly) (interchain with G-Cter in ubiquitin)" evidence="59">
    <location>
        <position position="270"/>
    </location>
</feature>
<feature type="cross-link" description="(Microbial infection) Glycyl lysine isopeptide (Lys-Gly) (interchain with G-Cter in ubiquitin)" evidence="58 59 60">
    <location>
        <position position="297"/>
    </location>
</feature>
<feature type="cross-link" description="(Microbial infection) Glycyl lysine isopeptide (Lys-Gly) (interchain with G-Cter in ubiquitin)" evidence="58">
    <location>
        <position position="301"/>
    </location>
</feature>
<feature type="cross-link" description="(Microbial infection) Glycyl lysine isopeptide (Lys-Gly) (interchain with G-Cter in ubiquitin)" evidence="58 59 60">
    <location>
        <position position="303"/>
    </location>
</feature>
<feature type="cross-link" description="(Microbial infection) Glycyl lysine isopeptide (Lys-Gly) (interchain with G-Cter in ubiquitin)" evidence="58 59 60">
    <location>
        <position position="334"/>
    </location>
</feature>
<feature type="splice variant" id="VSP_009588" description="In isoform 3." evidence="54">
    <original>VYSELKYHPEMRFFHWFSKWRK</original>
    <variation>VPPGLQSLCRQELSQLGKQTTH</variation>
    <location>
        <begin position="58"/>
        <end position="79"/>
    </location>
</feature>
<feature type="splice variant" id="VSP_009589" description="In isoform 3." evidence="54">
    <location>
        <begin position="80"/>
        <end position="384"/>
    </location>
</feature>
<feature type="sequence variant" id="VAR_017837" description="In dbSNP:rs8177832." evidence="52">
    <original>H</original>
    <variation>R</variation>
    <location>
        <position position="186"/>
    </location>
</feature>
<feature type="sequence variant" id="VAR_048723" description="In dbSNP:rs17000736.">
    <original>R</original>
    <variation>H</variation>
    <location>
        <position position="256"/>
    </location>
</feature>
<feature type="sequence variant" id="VAR_025060" description="In dbSNP:rs17496046." evidence="52">
    <original>Q</original>
    <variation>E</variation>
    <location>
        <position position="275"/>
    </location>
</feature>
<feature type="mutagenesis site" description="Loss of cytidine deaminase activity and significant decrease in antiviral activity; when associated with A-259." evidence="5 8 19">
    <original>E</original>
    <variation>A</variation>
    <location>
        <position position="67"/>
    </location>
</feature>
<feature type="mutagenesis site" description="No effect on cytidine deaminase and antiviral activity." evidence="5 8 19">
    <original>E</original>
    <variation>A</variation>
    <location>
        <position position="67"/>
    </location>
</feature>
<feature type="mutagenesis site" description="Decreases cytidine deaminase activity." evidence="5 8 19">
    <original>E</original>
    <variation>Q</variation>
    <location>
        <position position="67"/>
    </location>
</feature>
<feature type="mutagenesis site" description="Remains sensitive to HIV-1 Vif and able to bind Vif." evidence="42">
    <original>F</original>
    <variation>W</variation>
    <location>
        <position position="74"/>
    </location>
</feature>
<feature type="mutagenesis site" description="Remains sensitive to HIV-1 Vif and able to bind Vif." evidence="42">
    <original>L</original>
    <variation>D</variation>
    <location>
        <position position="80"/>
    </location>
</feature>
<feature type="mutagenesis site" description="Decreases cytidine deaminase activity." evidence="4 5">
    <original>H</original>
    <variation>A</variation>
    <location>
        <position position="81"/>
    </location>
</feature>
<feature type="mutagenesis site" description="Does not decrease cytidine deaminase activity." evidence="5">
    <original>E</original>
    <variation>Q</variation>
    <location>
        <position position="85"/>
    </location>
</feature>
<feature type="mutagenesis site" description="Remains sensitive to HIV-1 Vif and able to bind Vif." evidence="42">
    <original>Y</original>
    <variation>A</variation>
    <location>
        <position position="86"/>
    </location>
</feature>
<feature type="mutagenesis site" description="Decreases cytidine deaminase activity." evidence="4 5">
    <original>C</original>
    <variation>A</variation>
    <location>
        <position position="97"/>
    </location>
</feature>
<feature type="mutagenesis site" description="Decreases cytidine deaminase activity." evidence="4 5 8">
    <original>C</original>
    <variation>A</variation>
    <variation>S</variation>
    <location>
        <position position="100"/>
    </location>
</feature>
<feature type="mutagenesis site" description="Remains sensitive to HIV-1 Vif and able to bind Vif." evidence="42">
    <original>F</original>
    <variation>K</variation>
    <location>
        <position position="107"/>
    </location>
</feature>
<feature type="mutagenesis site" description="Resistant to HIV-1 Vif with complete loss of Vif-induced ubiquitination and degradation and Vif binding." evidence="14 42 51">
    <original>D</original>
    <variation>K</variation>
    <location>
        <position position="128"/>
    </location>
</feature>
<feature type="mutagenesis site" description="Nearly abolished catalytic efficiency of cytidine deaminase activity." evidence="46">
    <original>P</original>
    <variation>A</variation>
    <variation>G</variation>
    <location>
        <position position="210"/>
    </location>
</feature>
<feature type="mutagenesis site" description="Slightly reduces enzyme activity." evidence="21 25">
    <original>R</original>
    <variation>A</variation>
    <location>
        <position position="213"/>
    </location>
</feature>
<feature type="mutagenesis site" description="Reduces enzyme activity." evidence="21 25">
    <original>R</original>
    <variation>E</variation>
    <location>
        <position position="213"/>
    </location>
</feature>
<feature type="mutagenesis site" description="Abolishes enzyme activity." evidence="21 25">
    <original>R</original>
    <variation>A</variation>
    <variation>E</variation>
    <location>
        <position position="215"/>
    </location>
</feature>
<feature type="mutagenesis site" description="Modifies the spectrum of action against mobile genetic elements; when associated with K-247." evidence="33">
    <original>E</original>
    <variation>K</variation>
    <location>
        <position position="217"/>
    </location>
</feature>
<feature type="mutagenesis site" description="Loss of phosphorylation. No effect on cytidine deaminase activity or HIV-1 restriction activity." evidence="35">
    <original>T</original>
    <variation>A</variation>
    <location>
        <position position="218"/>
    </location>
</feature>
<feature type="mutagenesis site" description="Phosphomimetic mutant which shows loss of cytidine deaminase activity and HIV-1 restriction activity." evidence="35">
    <original>T</original>
    <variation>E</variation>
    <location>
        <position position="218"/>
    </location>
</feature>
<feature type="mutagenesis site" description="Does not decrease cytidine deaminase activity." evidence="5">
    <original>C</original>
    <variation>S</variation>
    <location>
        <position position="221"/>
    </location>
</feature>
<feature type="mutagenesis site" description="Abolishes enzyme activity." evidence="25">
    <original>N</original>
    <variation>A</variation>
    <location>
        <position position="244"/>
    </location>
</feature>
<feature type="mutagenesis site" description="Nearly abolished cytidine deaminase activity." evidence="46">
    <original>Q</original>
    <variation>A</variation>
    <location>
        <position position="245"/>
    </location>
</feature>
<feature type="mutagenesis site" description="Modifies the spectrum of action against mobile genetic elements; when associated with K-217." evidence="33">
    <original>P</original>
    <variation>K</variation>
    <location>
        <position position="247"/>
    </location>
</feature>
<feature type="mutagenesis site" description="Improved catalytic efficiency of cytidine deaminase activity." evidence="46">
    <original>H</original>
    <variation>A</variation>
    <location>
        <position position="248"/>
    </location>
</feature>
<feature type="mutagenesis site" description="Improved catalytic efficiency of cytidine deaminase activity." evidence="46">
    <original>H</original>
    <variation>A</variation>
    <location>
        <position position="250"/>
    </location>
</feature>
<feature type="mutagenesis site" description="Strongly reduced cytidine deaminase activity." evidence="46">
    <original>R</original>
    <variation>A</variation>
    <location>
        <position position="256"/>
    </location>
</feature>
<feature type="mutagenesis site" description="Decreases cytidine deaminase activity." evidence="4 5">
    <original>H</original>
    <variation>A</variation>
    <location>
        <position position="257"/>
    </location>
</feature>
<feature type="mutagenesis site" description="Loss of cytidine deaminase activity and significant decrease in antiviral activity." evidence="5 8 19 21">
    <original>E</original>
    <variation>A</variation>
    <location>
        <position position="259"/>
    </location>
</feature>
<feature type="mutagenesis site" description="Loss of cytidine deaminase activity and significant decrease in antiviral activity; when associated with A-67." evidence="5 8 19 21">
    <original>E</original>
    <variation>A</variation>
    <location>
        <position position="259"/>
    </location>
</feature>
<feature type="mutagenesis site" description="Decreases cytidine deaminase activity and antiviral activity." evidence="5 8 19 21">
    <original>E</original>
    <variation>Q</variation>
    <location>
        <position position="259"/>
    </location>
</feature>
<feature type="mutagenesis site" description="Nearly abolished cytidine deaminase activity." evidence="46">
    <original>D</original>
    <variation>A</variation>
    <location>
        <position position="264"/>
    </location>
</feature>
<feature type="mutagenesis site" description="Strongly reduced cytidine deaminase activity." evidence="46">
    <original>F</original>
    <variation>A</variation>
    <location>
        <position position="268"/>
    </location>
</feature>
<feature type="mutagenesis site" description="Abolishes enzyme activity." evidence="21 25">
    <original>W</original>
    <variation>A</variation>
    <location>
        <position position="285"/>
    </location>
</feature>
<feature type="mutagenesis site" description="Decreases cytidine deaminase activity." evidence="4 5">
    <original>C</original>
    <variation>A</variation>
    <location>
        <position position="288"/>
    </location>
</feature>
<feature type="mutagenesis site" description="Decreases cytidine deaminase activity." evidence="4 5 8">
    <original>C</original>
    <variation>A</variation>
    <variation>S</variation>
    <location>
        <position position="291"/>
    </location>
</feature>
<feature type="mutagenesis site" description="In 4KR mutant; decreased ubiquitination and degradation by an ECS complex hijacked by HIV-1 Vif; when associated with R-334." evidence="28 51">
    <original>KFISKNK</original>
    <variation>RFISRNR</variation>
    <location>
        <begin position="297"/>
        <end position="303"/>
    </location>
</feature>
<feature type="mutagenesis site" description="Abolishes enzyme activity." evidence="21">
    <original>R</original>
    <variation>A</variation>
    <variation>E</variation>
    <location>
        <position position="313"/>
    </location>
</feature>
<feature type="mutagenesis site" description="Abolishes enzyme activity." evidence="25">
    <original>Y</original>
    <variation>A</variation>
    <location>
        <position position="315"/>
    </location>
</feature>
<feature type="mutagenesis site" description="Slightly reduces enzyme activity." evidence="21">
    <original>R</original>
    <variation>A</variation>
    <location>
        <position position="320"/>
    </location>
</feature>
<feature type="mutagenesis site" description="Reduces enzyme activity." evidence="21">
    <original>R</original>
    <variation>E</variation>
    <location>
        <position position="320"/>
    </location>
</feature>
<feature type="mutagenesis site" description="Does not decrease cytidine deaminase activity." evidence="5">
    <original>E</original>
    <variation>Q</variation>
    <location>
        <position position="323"/>
    </location>
</feature>
<feature type="mutagenesis site" description="In 4KR mutant; decreased ubiquitination and degradation by an ECS complex hijacked by HIV-1 Vif; when associated with R-297--R-303." evidence="28">
    <original>K</original>
    <variation>R</variation>
    <location>
        <position position="334"/>
    </location>
</feature>
<feature type="mutagenesis site" description="Reduced catalytic efficiency of cytidine deaminase activity." evidence="46">
    <original>D</original>
    <variation>A</variation>
    <location>
        <position position="370"/>
    </location>
</feature>
<feature type="mutagenesis site" description="Reduced cytidine deaminase activity." evidence="46">
    <original>R</original>
    <variation>A</variation>
    <location>
        <position position="374"/>
    </location>
</feature>
<feature type="mutagenesis site" description="Strongly reduced cytidine deaminase activity." evidence="46">
    <original>R</original>
    <variation>A</variation>
    <location>
        <position position="376"/>
    </location>
</feature>
<feature type="mutagenesis site" description="Strongly reduced cytidine deaminase activity." evidence="46">
    <original>Q</original>
    <variation>A</variation>
    <location>
        <position position="380"/>
    </location>
</feature>
<feature type="sequence conflict" description="In Ref. 1; no nucleotide entry." evidence="57" ref="1">
    <original>S</original>
    <variation>N</variation>
    <location>
        <position position="162"/>
    </location>
</feature>
<feature type="sequence conflict" description="In Ref. 1; no nucleotide entry." evidence="57" ref="1">
    <original>D</original>
    <variation>Y</variation>
    <location>
        <position position="370"/>
    </location>
</feature>
<feature type="strand" evidence="76">
    <location>
        <begin position="10"/>
        <end position="12"/>
    </location>
</feature>
<feature type="helix" evidence="78">
    <location>
        <begin position="14"/>
        <end position="20"/>
    </location>
</feature>
<feature type="strand" evidence="78">
    <location>
        <begin position="35"/>
        <end position="42"/>
    </location>
</feature>
<feature type="strand" evidence="78">
    <location>
        <begin position="45"/>
        <end position="48"/>
    </location>
</feature>
<feature type="strand" evidence="78">
    <location>
        <begin position="50"/>
        <end position="52"/>
    </location>
</feature>
<feature type="strand" evidence="78">
    <location>
        <begin position="56"/>
        <end position="58"/>
    </location>
</feature>
<feature type="helix" evidence="75">
    <location>
        <begin position="62"/>
        <end position="64"/>
    </location>
</feature>
<feature type="helix" evidence="78">
    <location>
        <begin position="66"/>
        <end position="77"/>
    </location>
</feature>
<feature type="helix" evidence="75">
    <location>
        <begin position="78"/>
        <end position="80"/>
    </location>
</feature>
<feature type="strand" evidence="78">
    <location>
        <begin position="86"/>
        <end position="94"/>
    </location>
</feature>
<feature type="helix" evidence="78">
    <location>
        <begin position="98"/>
        <end position="110"/>
    </location>
</feature>
<feature type="strand" evidence="78">
    <location>
        <begin position="114"/>
        <end position="122"/>
    </location>
</feature>
<feature type="turn" evidence="78">
    <location>
        <begin position="124"/>
        <end position="127"/>
    </location>
</feature>
<feature type="helix" evidence="78">
    <location>
        <begin position="129"/>
        <end position="140"/>
    </location>
</feature>
<feature type="strand" evidence="77">
    <location>
        <begin position="142"/>
        <end position="144"/>
    </location>
</feature>
<feature type="strand" evidence="78">
    <location>
        <begin position="148"/>
        <end position="151"/>
    </location>
</feature>
<feature type="helix" evidence="78">
    <location>
        <begin position="154"/>
        <end position="163"/>
    </location>
</feature>
<feature type="helix" evidence="78">
    <location>
        <begin position="178"/>
        <end position="193"/>
    </location>
</feature>
<feature type="strand" evidence="70">
    <location>
        <begin position="195"/>
        <end position="197"/>
    </location>
</feature>
<feature type="helix" evidence="72">
    <location>
        <begin position="199"/>
        <end position="206"/>
    </location>
</feature>
<feature type="helix" evidence="74">
    <location>
        <begin position="209"/>
        <end position="211"/>
    </location>
</feature>
<feature type="strand" evidence="69">
    <location>
        <begin position="213"/>
        <end position="217"/>
    </location>
</feature>
<feature type="strand" evidence="72">
    <location>
        <begin position="219"/>
        <end position="228"/>
    </location>
</feature>
<feature type="strand" evidence="72">
    <location>
        <begin position="231"/>
        <end position="234"/>
    </location>
</feature>
<feature type="helix" evidence="72">
    <location>
        <begin position="236"/>
        <end position="238"/>
    </location>
</feature>
<feature type="strand" evidence="72">
    <location>
        <begin position="240"/>
        <end position="243"/>
    </location>
</feature>
<feature type="strand" evidence="75">
    <location>
        <begin position="249"/>
        <end position="251"/>
    </location>
</feature>
<feature type="helix" evidence="72">
    <location>
        <begin position="258"/>
        <end position="265"/>
    </location>
</feature>
<feature type="helix" evidence="72">
    <location>
        <begin position="266"/>
        <end position="269"/>
    </location>
</feature>
<feature type="strand" evidence="71">
    <location>
        <begin position="273"/>
        <end position="275"/>
    </location>
</feature>
<feature type="strand" evidence="72">
    <location>
        <begin position="277"/>
        <end position="285"/>
    </location>
</feature>
<feature type="helix" evidence="72">
    <location>
        <begin position="289"/>
        <end position="301"/>
    </location>
</feature>
<feature type="strand" evidence="72">
    <location>
        <begin position="305"/>
        <end position="313"/>
    </location>
</feature>
<feature type="strand" evidence="72">
    <location>
        <begin position="318"/>
        <end position="320"/>
    </location>
</feature>
<feature type="helix" evidence="72">
    <location>
        <begin position="321"/>
        <end position="330"/>
    </location>
</feature>
<feature type="strand" evidence="72">
    <location>
        <begin position="334"/>
        <end position="337"/>
    </location>
</feature>
<feature type="helix" evidence="72">
    <location>
        <begin position="340"/>
        <end position="350"/>
    </location>
</feature>
<feature type="turn" evidence="73">
    <location>
        <begin position="353"/>
        <end position="355"/>
    </location>
</feature>
<feature type="helix" evidence="72">
    <location>
        <begin position="364"/>
        <end position="379"/>
    </location>
</feature>
<name>ABC3G_HUMAN</name>